<name>TNIP1_HUMAN</name>
<protein>
    <recommendedName>
        <fullName>TNFAIP3-interacting protein 1</fullName>
    </recommendedName>
    <alternativeName>
        <fullName>A20-binding inhibitor of NF-kappa-B activation 1</fullName>
        <shortName>ABIN-1</shortName>
    </alternativeName>
    <alternativeName>
        <fullName>HIV-1 Nef-interacting protein</fullName>
    </alternativeName>
    <alternativeName>
        <fullName>Nef-associated factor 1</fullName>
        <shortName>Naf1</shortName>
    </alternativeName>
    <alternativeName>
        <fullName>Nip40-1</fullName>
    </alternativeName>
    <alternativeName>
        <fullName>Virion-associated nuclear shuttling protein</fullName>
        <shortName>VAN</shortName>
        <shortName>hVAN</shortName>
    </alternativeName>
</protein>
<proteinExistence type="evidence at protein level"/>
<sequence length="636" mass="71864">MEGRGPYRIYDPGGSVPSGEASAAFERLVKENSRLKEKMQGIKMLGELLEESQMEATRLRQKAEELVKDNELLPPPSPSLGSFDPLAELTGKDSNVTASPTAPACPSDKPAPVQKPPSSGTSSEFEVVTPEEQNSPESSSHANAMALGPLPREDGNLMLHLQRLETTLSVCAEEPDHGQLFTHLGRMALEFNRLASKVHKNEQRTSILQTLCEQLRKENEALKAKLDKGLEQRDQAAERLREENLELKKLLMSNGNKEGASGRPGSPKMEGTGKKAVAGQQQASVTAGKVPEVVALGAAEKKVKMLEQQRSELLEVNKQWDQHFRSMKQQYEQKITELRQKLADLQKQVTDLEAEREQKQRDFDRKLLLAKSKIEMEETDKEQLTAEAKELRQKVKYLQDQLSPLTRQREYQEKEIQRLNKALEEALSIQTPPSSPPTAFGSPEGAGALLRKQELVTQNELLKQQVKIFEEDFQRERSDRERMNEEKEELKKQVEKLQAQVTLSNAQLKAFKDEEKAREALRQQKRKAKASGERYHVEPHPEHLCGAYPYAYPPMPAMVPHHGFEDWSQIRYPPPPMAMEHPPPLPNSRLFHLPEYTWRLPCGGVRNPNQSSQVMDPPTARPTEPESPKNDREGPQ</sequence>
<evidence type="ECO:0000250" key="1"/>
<evidence type="ECO:0000250" key="2">
    <source>
        <dbReference type="UniProtKB" id="Q9WUU8"/>
    </source>
</evidence>
<evidence type="ECO:0000255" key="3"/>
<evidence type="ECO:0000256" key="4">
    <source>
        <dbReference type="SAM" id="MobiDB-lite"/>
    </source>
</evidence>
<evidence type="ECO:0000269" key="5">
    <source>
    </source>
</evidence>
<evidence type="ECO:0000269" key="6">
    <source>
    </source>
</evidence>
<evidence type="ECO:0000269" key="7">
    <source>
    </source>
</evidence>
<evidence type="ECO:0000269" key="8">
    <source>
    </source>
</evidence>
<evidence type="ECO:0000269" key="9">
    <source>
    </source>
</evidence>
<evidence type="ECO:0000269" key="10">
    <source>
    </source>
</evidence>
<evidence type="ECO:0000269" key="11">
    <source>
    </source>
</evidence>
<evidence type="ECO:0000269" key="12">
    <source>
    </source>
</evidence>
<evidence type="ECO:0000303" key="13">
    <source>
    </source>
</evidence>
<evidence type="ECO:0000303" key="14">
    <source>
    </source>
</evidence>
<evidence type="ECO:0000303" key="15">
    <source>
    </source>
</evidence>
<evidence type="ECO:0000303" key="16">
    <source>
    </source>
</evidence>
<evidence type="ECO:0000303" key="17">
    <source>
    </source>
</evidence>
<evidence type="ECO:0000305" key="18"/>
<evidence type="ECO:0007744" key="19">
    <source>
    </source>
</evidence>
<evidence type="ECO:0007744" key="20">
    <source>
    </source>
</evidence>
<evidence type="ECO:0007744" key="21">
    <source>
    </source>
</evidence>
<evidence type="ECO:0007744" key="22">
    <source>
    </source>
</evidence>
<evidence type="ECO:0007744" key="23">
    <source>
    </source>
</evidence>
<evidence type="ECO:0007744" key="24">
    <source>
    </source>
</evidence>
<evidence type="ECO:0007744" key="25">
    <source>
    </source>
</evidence>
<evidence type="ECO:0007829" key="26">
    <source>
        <dbReference type="PDB" id="7EAL"/>
    </source>
</evidence>
<evidence type="ECO:0007829" key="27">
    <source>
        <dbReference type="PDB" id="7EB9"/>
    </source>
</evidence>
<evidence type="ECO:0007829" key="28">
    <source>
        <dbReference type="PDB" id="8YFM"/>
    </source>
</evidence>
<keyword id="KW-0002">3D-structure</keyword>
<keyword id="KW-0025">Alternative splicing</keyword>
<keyword id="KW-0175">Coiled coil</keyword>
<keyword id="KW-0963">Cytoplasm</keyword>
<keyword id="KW-0395">Inflammatory response</keyword>
<keyword id="KW-0488">Methylation</keyword>
<keyword id="KW-0539">Nucleus</keyword>
<keyword id="KW-0597">Phosphoprotein</keyword>
<keyword id="KW-1267">Proteomics identification</keyword>
<keyword id="KW-1185">Reference proteome</keyword>
<reference key="1">
    <citation type="journal article" date="1999" name="FEBS Lett.">
        <title>Identification and cloning of a novel cellular protein Naf1, Nef-associated factor 1, that increases cell surface CD4 expression.</title>
        <authorList>
            <person name="Fukushi M."/>
            <person name="Dixon J."/>
            <person name="Kimura T."/>
            <person name="Tsurutani N."/>
            <person name="Dixon M.J."/>
            <person name="Yamamoto N."/>
        </authorList>
    </citation>
    <scope>NUCLEOTIDE SEQUENCE [MRNA] (ISOFORMS 1 AND 2)</scope>
    <source>
        <tissue>Peripheral blood</tissue>
    </source>
</reference>
<reference key="2">
    <citation type="journal article" date="2000" name="J. Virol.">
        <title>A human nuclear shuttling protein that interacts with human immunodeficiency virus type 1 matrix is packaged into virions.</title>
        <authorList>
            <person name="Gupta K."/>
            <person name="Ott D."/>
            <person name="Hope T.J."/>
            <person name="Siliciano R.F."/>
            <person name="Boeke J.D."/>
        </authorList>
    </citation>
    <scope>NUCLEOTIDE SEQUENCE [MRNA] (ISOFORM 1)</scope>
    <source>
        <tissue>Leukocyte</tissue>
    </source>
</reference>
<reference key="3">
    <citation type="journal article" date="2006" name="Int. J. Mol. Med.">
        <title>Multiple splicing variants of Naf1/ABIN-1 transcripts and their alterations in hematopoietic tumors.</title>
        <authorList>
            <person name="Shiote Y."/>
            <person name="Ouchida M."/>
            <person name="Jitsumori Y."/>
            <person name="Ogama Y."/>
            <person name="Matsuo Y."/>
            <person name="Ishimaru F."/>
            <person name="Tanimoto M."/>
            <person name="Shimizu K."/>
        </authorList>
    </citation>
    <scope>NUCLEOTIDE SEQUENCE [MRNA] (ISOFORMS 1; 2; 3; 4; 5; 6; 7 AND 8)</scope>
    <scope>ALTERNATIVE SPLICING</scope>
    <scope>TISSUE SPECIFICITY</scope>
    <scope>FUNCTION</scope>
</reference>
<reference key="4">
    <citation type="journal article" date="1995" name="DNA Res.">
        <title>Prediction of the coding sequences of unidentified human genes. III. The coding sequences of 40 new genes (KIAA0081-KIAA0120) deduced by analysis of cDNA clones from human cell line KG-1.</title>
        <authorList>
            <person name="Nagase T."/>
            <person name="Miyajima N."/>
            <person name="Tanaka A."/>
            <person name="Sazuka T."/>
            <person name="Seki N."/>
            <person name="Sato S."/>
            <person name="Tabata S."/>
            <person name="Ishikawa K."/>
            <person name="Kawarabayasi Y."/>
            <person name="Kotani H."/>
            <person name="Nomura N."/>
        </authorList>
    </citation>
    <scope>NUCLEOTIDE SEQUENCE [LARGE SCALE MRNA] (ISOFORM 1)</scope>
    <source>
        <tissue>Bone marrow</tissue>
    </source>
</reference>
<reference key="5">
    <citation type="journal article" date="2002" name="DNA Res.">
        <title>Construction of expression-ready cDNA clones for KIAA genes: manual curation of 330 KIAA cDNA clones.</title>
        <authorList>
            <person name="Nakajima D."/>
            <person name="Okazaki N."/>
            <person name="Yamakawa H."/>
            <person name="Kikuno R."/>
            <person name="Ohara O."/>
            <person name="Nagase T."/>
        </authorList>
    </citation>
    <scope>SEQUENCE REVISION</scope>
</reference>
<reference key="6">
    <citation type="journal article" date="2004" name="Nat. Genet.">
        <title>Complete sequencing and characterization of 21,243 full-length human cDNAs.</title>
        <authorList>
            <person name="Ota T."/>
            <person name="Suzuki Y."/>
            <person name="Nishikawa T."/>
            <person name="Otsuki T."/>
            <person name="Sugiyama T."/>
            <person name="Irie R."/>
            <person name="Wakamatsu A."/>
            <person name="Hayashi K."/>
            <person name="Sato H."/>
            <person name="Nagai K."/>
            <person name="Kimura K."/>
            <person name="Makita H."/>
            <person name="Sekine M."/>
            <person name="Obayashi M."/>
            <person name="Nishi T."/>
            <person name="Shibahara T."/>
            <person name="Tanaka T."/>
            <person name="Ishii S."/>
            <person name="Yamamoto J."/>
            <person name="Saito K."/>
            <person name="Kawai Y."/>
            <person name="Isono Y."/>
            <person name="Nakamura Y."/>
            <person name="Nagahari K."/>
            <person name="Murakami K."/>
            <person name="Yasuda T."/>
            <person name="Iwayanagi T."/>
            <person name="Wagatsuma M."/>
            <person name="Shiratori A."/>
            <person name="Sudo H."/>
            <person name="Hosoiri T."/>
            <person name="Kaku Y."/>
            <person name="Kodaira H."/>
            <person name="Kondo H."/>
            <person name="Sugawara M."/>
            <person name="Takahashi M."/>
            <person name="Kanda K."/>
            <person name="Yokoi T."/>
            <person name="Furuya T."/>
            <person name="Kikkawa E."/>
            <person name="Omura Y."/>
            <person name="Abe K."/>
            <person name="Kamihara K."/>
            <person name="Katsuta N."/>
            <person name="Sato K."/>
            <person name="Tanikawa M."/>
            <person name="Yamazaki M."/>
            <person name="Ninomiya K."/>
            <person name="Ishibashi T."/>
            <person name="Yamashita H."/>
            <person name="Murakawa K."/>
            <person name="Fujimori K."/>
            <person name="Tanai H."/>
            <person name="Kimata M."/>
            <person name="Watanabe M."/>
            <person name="Hiraoka S."/>
            <person name="Chiba Y."/>
            <person name="Ishida S."/>
            <person name="Ono Y."/>
            <person name="Takiguchi S."/>
            <person name="Watanabe S."/>
            <person name="Yosida M."/>
            <person name="Hotuta T."/>
            <person name="Kusano J."/>
            <person name="Kanehori K."/>
            <person name="Takahashi-Fujii A."/>
            <person name="Hara H."/>
            <person name="Tanase T.-O."/>
            <person name="Nomura Y."/>
            <person name="Togiya S."/>
            <person name="Komai F."/>
            <person name="Hara R."/>
            <person name="Takeuchi K."/>
            <person name="Arita M."/>
            <person name="Imose N."/>
            <person name="Musashino K."/>
            <person name="Yuuki H."/>
            <person name="Oshima A."/>
            <person name="Sasaki N."/>
            <person name="Aotsuka S."/>
            <person name="Yoshikawa Y."/>
            <person name="Matsunawa H."/>
            <person name="Ichihara T."/>
            <person name="Shiohata N."/>
            <person name="Sano S."/>
            <person name="Moriya S."/>
            <person name="Momiyama H."/>
            <person name="Satoh N."/>
            <person name="Takami S."/>
            <person name="Terashima Y."/>
            <person name="Suzuki O."/>
            <person name="Nakagawa S."/>
            <person name="Senoh A."/>
            <person name="Mizoguchi H."/>
            <person name="Goto Y."/>
            <person name="Shimizu F."/>
            <person name="Wakebe H."/>
            <person name="Hishigaki H."/>
            <person name="Watanabe T."/>
            <person name="Sugiyama A."/>
            <person name="Takemoto M."/>
            <person name="Kawakami B."/>
            <person name="Yamazaki M."/>
            <person name="Watanabe K."/>
            <person name="Kumagai A."/>
            <person name="Itakura S."/>
            <person name="Fukuzumi Y."/>
            <person name="Fujimori Y."/>
            <person name="Komiyama M."/>
            <person name="Tashiro H."/>
            <person name="Tanigami A."/>
            <person name="Fujiwara T."/>
            <person name="Ono T."/>
            <person name="Yamada K."/>
            <person name="Fujii Y."/>
            <person name="Ozaki K."/>
            <person name="Hirao M."/>
            <person name="Ohmori Y."/>
            <person name="Kawabata A."/>
            <person name="Hikiji T."/>
            <person name="Kobatake N."/>
            <person name="Inagaki H."/>
            <person name="Ikema Y."/>
            <person name="Okamoto S."/>
            <person name="Okitani R."/>
            <person name="Kawakami T."/>
            <person name="Noguchi S."/>
            <person name="Itoh T."/>
            <person name="Shigeta K."/>
            <person name="Senba T."/>
            <person name="Matsumura K."/>
            <person name="Nakajima Y."/>
            <person name="Mizuno T."/>
            <person name="Morinaga M."/>
            <person name="Sasaki M."/>
            <person name="Togashi T."/>
            <person name="Oyama M."/>
            <person name="Hata H."/>
            <person name="Watanabe M."/>
            <person name="Komatsu T."/>
            <person name="Mizushima-Sugano J."/>
            <person name="Satoh T."/>
            <person name="Shirai Y."/>
            <person name="Takahashi Y."/>
            <person name="Nakagawa K."/>
            <person name="Okumura K."/>
            <person name="Nagase T."/>
            <person name="Nomura N."/>
            <person name="Kikuchi H."/>
            <person name="Masuho Y."/>
            <person name="Yamashita R."/>
            <person name="Nakai K."/>
            <person name="Yada T."/>
            <person name="Nakamura Y."/>
            <person name="Ohara O."/>
            <person name="Isogai T."/>
            <person name="Sugano S."/>
        </authorList>
    </citation>
    <scope>NUCLEOTIDE SEQUENCE [LARGE SCALE MRNA] (ISOFORM 3)</scope>
</reference>
<reference key="7">
    <citation type="journal article" date="2007" name="BMC Genomics">
        <title>The full-ORF clone resource of the German cDNA consortium.</title>
        <authorList>
            <person name="Bechtel S."/>
            <person name="Rosenfelder H."/>
            <person name="Duda A."/>
            <person name="Schmidt C.P."/>
            <person name="Ernst U."/>
            <person name="Wellenreuther R."/>
            <person name="Mehrle A."/>
            <person name="Schuster C."/>
            <person name="Bahr A."/>
            <person name="Bloecker H."/>
            <person name="Heubner D."/>
            <person name="Hoerlein A."/>
            <person name="Michel G."/>
            <person name="Wedler H."/>
            <person name="Koehrer K."/>
            <person name="Ottenwaelder B."/>
            <person name="Poustka A."/>
            <person name="Wiemann S."/>
            <person name="Schupp I."/>
        </authorList>
    </citation>
    <scope>NUCLEOTIDE SEQUENCE [LARGE SCALE MRNA] (ISOFORM 3)</scope>
    <source>
        <tissue>Colon endothelium</tissue>
    </source>
</reference>
<reference key="8">
    <citation type="journal article" date="2004" name="Nature">
        <title>The DNA sequence and comparative analysis of human chromosome 5.</title>
        <authorList>
            <person name="Schmutz J."/>
            <person name="Martin J."/>
            <person name="Terry A."/>
            <person name="Couronne O."/>
            <person name="Grimwood J."/>
            <person name="Lowry S."/>
            <person name="Gordon L.A."/>
            <person name="Scott D."/>
            <person name="Xie G."/>
            <person name="Huang W."/>
            <person name="Hellsten U."/>
            <person name="Tran-Gyamfi M."/>
            <person name="She X."/>
            <person name="Prabhakar S."/>
            <person name="Aerts A."/>
            <person name="Altherr M."/>
            <person name="Bajorek E."/>
            <person name="Black S."/>
            <person name="Branscomb E."/>
            <person name="Caoile C."/>
            <person name="Challacombe J.F."/>
            <person name="Chan Y.M."/>
            <person name="Denys M."/>
            <person name="Detter J.C."/>
            <person name="Escobar J."/>
            <person name="Flowers D."/>
            <person name="Fotopulos D."/>
            <person name="Glavina T."/>
            <person name="Gomez M."/>
            <person name="Gonzales E."/>
            <person name="Goodstein D."/>
            <person name="Grigoriev I."/>
            <person name="Groza M."/>
            <person name="Hammon N."/>
            <person name="Hawkins T."/>
            <person name="Haydu L."/>
            <person name="Israni S."/>
            <person name="Jett J."/>
            <person name="Kadner K."/>
            <person name="Kimball H."/>
            <person name="Kobayashi A."/>
            <person name="Lopez F."/>
            <person name="Lou Y."/>
            <person name="Martinez D."/>
            <person name="Medina C."/>
            <person name="Morgan J."/>
            <person name="Nandkeshwar R."/>
            <person name="Noonan J.P."/>
            <person name="Pitluck S."/>
            <person name="Pollard M."/>
            <person name="Predki P."/>
            <person name="Priest J."/>
            <person name="Ramirez L."/>
            <person name="Retterer J."/>
            <person name="Rodriguez A."/>
            <person name="Rogers S."/>
            <person name="Salamov A."/>
            <person name="Salazar A."/>
            <person name="Thayer N."/>
            <person name="Tice H."/>
            <person name="Tsai M."/>
            <person name="Ustaszewska A."/>
            <person name="Vo N."/>
            <person name="Wheeler J."/>
            <person name="Wu K."/>
            <person name="Yang J."/>
            <person name="Dickson M."/>
            <person name="Cheng J.-F."/>
            <person name="Eichler E.E."/>
            <person name="Olsen A."/>
            <person name="Pennacchio L.A."/>
            <person name="Rokhsar D.S."/>
            <person name="Richardson P."/>
            <person name="Lucas S.M."/>
            <person name="Myers R.M."/>
            <person name="Rubin E.M."/>
        </authorList>
    </citation>
    <scope>NUCLEOTIDE SEQUENCE [LARGE SCALE GENOMIC DNA]</scope>
</reference>
<reference key="9">
    <citation type="submission" date="2005-07" db="EMBL/GenBank/DDBJ databases">
        <authorList>
            <person name="Mural R.J."/>
            <person name="Istrail S."/>
            <person name="Sutton G.G."/>
            <person name="Florea L."/>
            <person name="Halpern A.L."/>
            <person name="Mobarry C.M."/>
            <person name="Lippert R."/>
            <person name="Walenz B."/>
            <person name="Shatkay H."/>
            <person name="Dew I."/>
            <person name="Miller J.R."/>
            <person name="Flanigan M.J."/>
            <person name="Edwards N.J."/>
            <person name="Bolanos R."/>
            <person name="Fasulo D."/>
            <person name="Halldorsson B.V."/>
            <person name="Hannenhalli S."/>
            <person name="Turner R."/>
            <person name="Yooseph S."/>
            <person name="Lu F."/>
            <person name="Nusskern D.R."/>
            <person name="Shue B.C."/>
            <person name="Zheng X.H."/>
            <person name="Zhong F."/>
            <person name="Delcher A.L."/>
            <person name="Huson D.H."/>
            <person name="Kravitz S.A."/>
            <person name="Mouchard L."/>
            <person name="Reinert K."/>
            <person name="Remington K.A."/>
            <person name="Clark A.G."/>
            <person name="Waterman M.S."/>
            <person name="Eichler E.E."/>
            <person name="Adams M.D."/>
            <person name="Hunkapiller M.W."/>
            <person name="Myers E.W."/>
            <person name="Venter J.C."/>
        </authorList>
    </citation>
    <scope>NUCLEOTIDE SEQUENCE [LARGE SCALE GENOMIC DNA]</scope>
</reference>
<reference key="10">
    <citation type="journal article" date="2004" name="Genome Res.">
        <title>The status, quality, and expansion of the NIH full-length cDNA project: the Mammalian Gene Collection (MGC).</title>
        <authorList>
            <consortium name="The MGC Project Team"/>
        </authorList>
    </citation>
    <scope>NUCLEOTIDE SEQUENCE [LARGE SCALE MRNA] (ISOFORM 1)</scope>
    <source>
        <tissue>Lung</tissue>
    </source>
</reference>
<reference key="11">
    <citation type="journal article" date="1996" name="Genome Res.">
        <title>Transcriptional map of the Treacher Collins candidate gene region.</title>
        <authorList>
            <person name="Loftus S.K."/>
            <person name="Dixon J."/>
            <person name="Koprivnikar K."/>
            <person name="Dixon M.J."/>
            <person name="Wasmuth J.J."/>
        </authorList>
    </citation>
    <scope>NUCLEOTIDE SEQUENCE [MRNA] OF 136-636 (ISOFORM 2)</scope>
    <source>
        <tissue>Craniofacial</tissue>
    </source>
</reference>
<reference key="12">
    <citation type="submission" date="1997-01" db="EMBL/GenBank/DDBJ databases">
        <authorList>
            <person name="Fukushi M."/>
            <person name="Kimura T."/>
            <person name="Yamamoto N."/>
        </authorList>
    </citation>
    <scope>NUCLEOTIDE SEQUENCE [MRNA] OF 94-412</scope>
</reference>
<reference key="13">
    <citation type="journal article" date="2002" name="Biochem. Biophys. Res. Commun.">
        <title>A new ERK2 binding protein, Naf1, attenuates the EGF/ERK2 nuclear signaling.</title>
        <authorList>
            <person name="Zhang S."/>
            <person name="Fukushi M."/>
            <person name="Hashimoto S."/>
            <person name="Gao C."/>
            <person name="Huang L."/>
            <person name="Fukuyo Y."/>
            <person name="Nakajima T."/>
            <person name="Amagasa T."/>
            <person name="Enomoto S."/>
            <person name="Koike K."/>
            <person name="Miura O."/>
            <person name="Yamamoto N."/>
            <person name="Tsuchida N."/>
        </authorList>
    </citation>
    <scope>FUNCTION</scope>
    <scope>INTERACTION WITH MAPK1</scope>
</reference>
<reference key="14">
    <citation type="journal article" date="2006" name="J. Biol. Chem.">
        <title>ABIN-1 binds to NEMO/IKKgamma and co-operates with A20 in inhibiting NF-kappaB.</title>
        <authorList>
            <person name="Mauro C."/>
            <person name="Pacifico F."/>
            <person name="Lavorgna A."/>
            <person name="Mellone S."/>
            <person name="Iannetti A."/>
            <person name="Acquaviva R."/>
            <person name="Formisano S."/>
            <person name="Vito P."/>
            <person name="Leonardi A."/>
        </authorList>
    </citation>
    <scope>FUNCTION</scope>
    <scope>INTERACTION WITH IKBKG AND TNFAIP3</scope>
</reference>
<reference key="15">
    <citation type="journal article" date="2006" name="Nat. Biotechnol.">
        <title>A probability-based approach for high-throughput protein phosphorylation analysis and site localization.</title>
        <authorList>
            <person name="Beausoleil S.A."/>
            <person name="Villen J."/>
            <person name="Gerber S.A."/>
            <person name="Rush J."/>
            <person name="Gygi S.P."/>
        </authorList>
    </citation>
    <scope>PHOSPHORYLATION [LARGE SCALE ANALYSIS] AT SER-403</scope>
    <scope>IDENTIFICATION BY MASS SPECTROMETRY [LARGE SCALE ANALYSIS]</scope>
    <source>
        <tissue>Cervix carcinoma</tissue>
    </source>
</reference>
<reference key="16">
    <citation type="journal article" date="2007" name="Nat. Immunol.">
        <title>P-selectin primes leukocyte integrin activation during inflammation.</title>
        <authorList>
            <person name="Wang H.B."/>
            <person name="Wang J.T."/>
            <person name="Zhang L."/>
            <person name="Geng Z.H."/>
            <person name="Xu W.L."/>
            <person name="Xu T."/>
            <person name="Huo Y."/>
            <person name="Zhu X."/>
            <person name="Plow E.F."/>
            <person name="Chen M."/>
            <person name="Geng J.G."/>
        </authorList>
    </citation>
    <scope>FUNCTION</scope>
    <scope>INTERACTION WITH SELPLG AND PIK3CD</scope>
    <scope>PHOSPHORYLATION AT TYR-552</scope>
    <scope>MUTAGENESIS OF TYR-552</scope>
</reference>
<reference key="17">
    <citation type="journal article" date="2011" name="J. Biol. Chem.">
        <title>ABIN1 protein cooperates with TAX1BP1 and A20 proteins to inhibit antiviral signaling.</title>
        <authorList>
            <person name="Gao L."/>
            <person name="Coope H."/>
            <person name="Grant S."/>
            <person name="Ma A."/>
            <person name="Ley S.C."/>
            <person name="Harhaj E.W."/>
        </authorList>
    </citation>
    <scope>FUNCTION</scope>
    <scope>INTERACTION WITH TAX1BP1</scope>
</reference>
<reference key="18">
    <citation type="journal article" date="2008" name="Proc. Natl. Acad. Sci. U.S.A.">
        <title>A quantitative atlas of mitotic phosphorylation.</title>
        <authorList>
            <person name="Dephoure N."/>
            <person name="Zhou C."/>
            <person name="Villen J."/>
            <person name="Beausoleil S.A."/>
            <person name="Bakalarski C.E."/>
            <person name="Elledge S.J."/>
            <person name="Gygi S.P."/>
        </authorList>
    </citation>
    <scope>PHOSPHORYLATION [LARGE SCALE ANALYSIS] AT SER-403</scope>
    <scope>IDENTIFICATION BY MASS SPECTROMETRY [LARGE SCALE ANALYSIS]</scope>
    <source>
        <tissue>Cervix carcinoma</tissue>
    </source>
</reference>
<reference key="19">
    <citation type="journal article" date="2009" name="Anal. Chem.">
        <title>Lys-N and trypsin cover complementary parts of the phosphoproteome in a refined SCX-based approach.</title>
        <authorList>
            <person name="Gauci S."/>
            <person name="Helbig A.O."/>
            <person name="Slijper M."/>
            <person name="Krijgsveld J."/>
            <person name="Heck A.J."/>
            <person name="Mohammed S."/>
        </authorList>
    </citation>
    <scope>IDENTIFICATION BY MASS SPECTROMETRY [LARGE SCALE ANALYSIS]</scope>
</reference>
<reference key="20">
    <citation type="journal article" date="2009" name="Sci. Signal.">
        <title>Quantitative phosphoproteomic analysis of T cell receptor signaling reveals system-wide modulation of protein-protein interactions.</title>
        <authorList>
            <person name="Mayya V."/>
            <person name="Lundgren D.H."/>
            <person name="Hwang S.-I."/>
            <person name="Rezaul K."/>
            <person name="Wu L."/>
            <person name="Eng J.K."/>
            <person name="Rodionov V."/>
            <person name="Han D.K."/>
        </authorList>
    </citation>
    <scope>PHOSPHORYLATION [LARGE SCALE ANALYSIS] AT THR-438</scope>
    <scope>IDENTIFICATION BY MASS SPECTROMETRY [LARGE SCALE ANALYSIS]</scope>
    <source>
        <tissue>Leukemic T-cell</tissue>
    </source>
</reference>
<reference key="21">
    <citation type="journal article" date="2010" name="Nat. Cell Biol.">
        <title>A bacterial E3 ubiquitin ligase IpaH9.8 targets NEMO/IKKgamma to dampen the host NF-kappaB-mediated inflammatory response.</title>
        <authorList>
            <person name="Ashida H."/>
            <person name="Kim M."/>
            <person name="Schmidt-Supprian M."/>
            <person name="Ma A."/>
            <person name="Ogawa M."/>
            <person name="Sasakawa C."/>
        </authorList>
    </citation>
    <scope>FUNCTION</scope>
    <scope>INTERACTION WITH SHIGELLA FLEXNERI IPAH9.8 (MICROBIAL INFECTION)</scope>
    <scope>MUTAGENESIS OF 476-GLU-ARG-477</scope>
</reference>
<reference key="22">
    <citation type="journal article" date="2010" name="Sci. Signal.">
        <title>Quantitative phosphoproteomics reveals widespread full phosphorylation site occupancy during mitosis.</title>
        <authorList>
            <person name="Olsen J.V."/>
            <person name="Vermeulen M."/>
            <person name="Santamaria A."/>
            <person name="Kumar C."/>
            <person name="Miller M.L."/>
            <person name="Jensen L.J."/>
            <person name="Gnad F."/>
            <person name="Cox J."/>
            <person name="Jensen T.S."/>
            <person name="Nigg E.A."/>
            <person name="Brunak S."/>
            <person name="Mann M."/>
        </authorList>
    </citation>
    <scope>PHOSPHORYLATION [LARGE SCALE ANALYSIS] AT SER-403 AND SER-442</scope>
    <scope>IDENTIFICATION BY MASS SPECTROMETRY [LARGE SCALE ANALYSIS]</scope>
    <source>
        <tissue>Cervix carcinoma</tissue>
    </source>
</reference>
<reference key="23">
    <citation type="journal article" date="2011" name="BMC Syst. Biol.">
        <title>Initial characterization of the human central proteome.</title>
        <authorList>
            <person name="Burkard T.R."/>
            <person name="Planyavsky M."/>
            <person name="Kaupe I."/>
            <person name="Breitwieser F.P."/>
            <person name="Buerckstuemmer T."/>
            <person name="Bennett K.L."/>
            <person name="Superti-Furga G."/>
            <person name="Colinge J."/>
        </authorList>
    </citation>
    <scope>IDENTIFICATION BY MASS SPECTROMETRY [LARGE SCALE ANALYSIS]</scope>
</reference>
<reference key="24">
    <citation type="journal article" date="2011" name="J. Exp. Med.">
        <title>Polyubiquitin binding to ABIN1 is required to prevent autoimmunity.</title>
        <authorList>
            <person name="Nanda S.K."/>
            <person name="Venigalla R.K."/>
            <person name="Ordureau A."/>
            <person name="Patterson-Kane J.C."/>
            <person name="Powell D.W."/>
            <person name="Toth R."/>
            <person name="Arthur J.S."/>
            <person name="Cohen P."/>
        </authorList>
    </citation>
    <scope>UBIQUITIN-BINDING</scope>
    <scope>MUTAGENESIS OF ASP-472</scope>
</reference>
<reference key="25">
    <citation type="journal article" date="2013" name="J. Proteome Res.">
        <title>Toward a comprehensive characterization of a human cancer cell phosphoproteome.</title>
        <authorList>
            <person name="Zhou H."/>
            <person name="Di Palma S."/>
            <person name="Preisinger C."/>
            <person name="Peng M."/>
            <person name="Polat A.N."/>
            <person name="Heck A.J."/>
            <person name="Mohammed S."/>
        </authorList>
    </citation>
    <scope>PHOSPHORYLATION [LARGE SCALE ANALYSIS] AT SER-403 AND SER-627</scope>
    <scope>IDENTIFICATION BY MASS SPECTROMETRY [LARGE SCALE ANALYSIS]</scope>
    <source>
        <tissue>Cervix carcinoma</tissue>
        <tissue>Erythroleukemia</tissue>
    </source>
</reference>
<reference key="26">
    <citation type="journal article" date="2014" name="J. Proteomics">
        <title>An enzyme assisted RP-RPLC approach for in-depth analysis of human liver phosphoproteome.</title>
        <authorList>
            <person name="Bian Y."/>
            <person name="Song C."/>
            <person name="Cheng K."/>
            <person name="Dong M."/>
            <person name="Wang F."/>
            <person name="Huang J."/>
            <person name="Sun D."/>
            <person name="Wang L."/>
            <person name="Ye M."/>
            <person name="Zou H."/>
        </authorList>
    </citation>
    <scope>PHOSPHORYLATION [LARGE SCALE ANALYSIS] AT SER-77 AND SER-284</scope>
    <scope>IDENTIFICATION BY MASS SPECTROMETRY [LARGE SCALE ANALYSIS]</scope>
    <source>
        <tissue>Liver</tissue>
    </source>
</reference>
<reference key="27">
    <citation type="journal article" date="2014" name="Mol. Cell. Proteomics">
        <title>Immunoaffinity enrichment and mass spectrometry analysis of protein methylation.</title>
        <authorList>
            <person name="Guo A."/>
            <person name="Gu H."/>
            <person name="Zhou J."/>
            <person name="Mulhern D."/>
            <person name="Wang Y."/>
            <person name="Lee K.A."/>
            <person name="Yang V."/>
            <person name="Aguiar M."/>
            <person name="Kornhauser J."/>
            <person name="Jia X."/>
            <person name="Ren J."/>
            <person name="Beausoleil S.A."/>
            <person name="Silva J.C."/>
            <person name="Vemulapalli V."/>
            <person name="Bedford M.T."/>
            <person name="Comb M.J."/>
        </authorList>
    </citation>
    <scope>METHYLATION [LARGE SCALE ANALYSIS] AT ARG-599</scope>
    <scope>IDENTIFICATION BY MASS SPECTROMETRY [LARGE SCALE ANALYSIS]</scope>
    <source>
        <tissue>Colon carcinoma</tissue>
    </source>
</reference>
<reference key="28">
    <citation type="journal article" date="2011" name="Clin. Cancer Res.">
        <title>A20, ABIN-1/2, and CARD11 mutations and their prognostic value in gastrointestinal diffuse large B-cell lymphoma.</title>
        <authorList>
            <person name="Dong G."/>
            <person name="Chanudet E."/>
            <person name="Zeng N."/>
            <person name="Appert A."/>
            <person name="Chen Y.W."/>
            <person name="Au W.Y."/>
            <person name="Hamoudi R.A."/>
            <person name="Watkins A.J."/>
            <person name="Ye H."/>
            <person name="Liu H."/>
            <person name="Gao Z."/>
            <person name="Chuang S.S."/>
            <person name="Srivastava G."/>
            <person name="Du M.Q."/>
        </authorList>
    </citation>
    <scope>VARIANTS TRP-263; MET-286; THR-374 AND LYS-476</scope>
</reference>
<comment type="function">
    <text evidence="5 6 7 8 9 12">Inhibits NF-kappa-B activation and TNF-induced NF-kappa-B-dependent gene expression by regulating TAX1BP1 and A20/TNFAIP3-mediated deubiquitination of IKBKG; proposed to link A20/TNFAIP3 to ubiquitinated IKBKG (PubMed:21885437). Involved in regulation of EGF-induced ERK1/ERK2 signaling pathway; blocks MAPK3/MAPK1 nuclear translocation and MAPK1-dependent transcription. Increases cell surface CD4(T4) antigen expression. Involved in the anti-inflammatory response of macrophages and positively regulates TLR-induced activation of CEBPB. Involved in the prevention of autoimmunity; this function implicates binding to polyubiquitin. Involved in leukocyte integrin activation during inflammation; this function is mediated by association with SELPLG and dependent on phosphorylation by SRC-family kinases. Interacts with HIV-1 matrix protein and is packaged into virions and overexpression can inhibit viral replication. May regulate matrix nuclear localization, both nuclear import of PIC (Preintegration complex) and export of GAG polyprotein and viral genomic RNA during virion production. In case of infection, promotes association of IKBKG with Shigella flexneri E3 ubiquitin-protein ligase ipah9.8 p which in turn promotes polyubiquitination of IKBKG leading to its proteasome-dependent degradation and thus is perturbing NF-kappa-B activation during bacterial infection.</text>
</comment>
<comment type="subunit">
    <text evidence="5 6 8 12">Interacts with TNFAIP3 and IKBKG (polyubiquitinated); facilitates TNFAIP3-mediated de-ubiquitination of NEMO/IKBKG. Interacts with polyubiquitin. Interacts with MAPK1, SELPLG and PIK3CD. Interacts with IRAK1 (polyubiquitinated). Interacts with MYD88; the interaction is indicative for participation in an activated TLR-signaling complex. Interacts with HIV-1 matrix protein. Interacts with TAX1BP1 (PubMed:21885437).</text>
</comment>
<comment type="subunit">
    <text evidence="9">(Microbial infection) Interacts with Shigella flexneri ipah9.8; the interaction promotes polyubiquitination of IKBKG.</text>
</comment>
<comment type="interaction">
    <interactant intactId="EBI-357849">
        <id>Q15025</id>
    </interactant>
    <interactant intactId="EBI-541426">
        <id>Q9BXS5</id>
        <label>AP1M1</label>
    </interactant>
    <organismsDiffer>false</organismsDiffer>
    <experiments>3</experiments>
</comment>
<comment type="interaction">
    <interactant intactId="EBI-357849">
        <id>Q15025</id>
    </interactant>
    <interactant intactId="EBI-358049">
        <id>Q13895</id>
        <label>BYSL</label>
    </interactant>
    <organismsDiffer>false</organismsDiffer>
    <experiments>8</experiments>
</comment>
<comment type="interaction">
    <interactant intactId="EBI-357849">
        <id>Q15025</id>
    </interactant>
    <interactant intactId="EBI-715389">
        <id>Q9H7E9</id>
        <label>C8orf33</label>
    </interactant>
    <organismsDiffer>false</organismsDiffer>
    <experiments>3</experiments>
</comment>
<comment type="interaction">
    <interactant intactId="EBI-357849">
        <id>Q15025</id>
    </interactant>
    <interactant intactId="EBI-745040">
        <id>Q8NEF3</id>
        <label>CCDC112</label>
    </interactant>
    <organismsDiffer>false</organismsDiffer>
    <experiments>3</experiments>
</comment>
<comment type="interaction">
    <interactant intactId="EBI-357849">
        <id>Q15025</id>
    </interactant>
    <interactant intactId="EBI-3905829">
        <id>P51959</id>
        <label>CCNG1</label>
    </interactant>
    <organismsDiffer>false</organismsDiffer>
    <experiments>8</experiments>
</comment>
<comment type="interaction">
    <interactant intactId="EBI-357849">
        <id>Q15025</id>
    </interactant>
    <interactant intactId="EBI-396137">
        <id>Q9UJX2</id>
        <label>CDC23</label>
    </interactant>
    <organismsDiffer>false</organismsDiffer>
    <experiments>3</experiments>
</comment>
<comment type="interaction">
    <interactant intactId="EBI-357849">
        <id>Q15025</id>
    </interactant>
    <interactant intactId="EBI-295634">
        <id>Q16543</id>
        <label>CDC37</label>
    </interactant>
    <organismsDiffer>false</organismsDiffer>
    <experiments>3</experiments>
</comment>
<comment type="interaction">
    <interactant intactId="EBI-357849">
        <id>Q15025</id>
    </interactant>
    <interactant intactId="EBI-2876678">
        <id>Q9H305</id>
        <label>CDIP1</label>
    </interactant>
    <organismsDiffer>false</organismsDiffer>
    <experiments>4</experiments>
</comment>
<comment type="interaction">
    <interactant intactId="EBI-357849">
        <id>Q15025</id>
    </interactant>
    <interactant intactId="EBI-742422">
        <id>Q96M91</id>
        <label>CFAP53</label>
    </interactant>
    <organismsDiffer>false</organismsDiffer>
    <experiments>3</experiments>
</comment>
<comment type="interaction">
    <interactant intactId="EBI-357849">
        <id>Q15025</id>
    </interactant>
    <interactant intactId="EBI-3867333">
        <id>A8MQ03</id>
        <label>CYSRT1</label>
    </interactant>
    <organismsDiffer>false</organismsDiffer>
    <experiments>3</experiments>
</comment>
<comment type="interaction">
    <interactant intactId="EBI-357849">
        <id>Q15025</id>
    </interactant>
    <interactant intactId="EBI-724310">
        <id>Q15038</id>
        <label>DAZAP2</label>
    </interactant>
    <organismsDiffer>false</organismsDiffer>
    <experiments>3</experiments>
</comment>
<comment type="interaction">
    <interactant intactId="EBI-357849">
        <id>Q15025</id>
    </interactant>
    <interactant intactId="EBI-710457">
        <id>Q7L190</id>
        <label>DPPA4</label>
    </interactant>
    <organismsDiffer>false</organismsDiffer>
    <experiments>3</experiments>
</comment>
<comment type="interaction">
    <interactant intactId="EBI-357849">
        <id>Q15025</id>
    </interactant>
    <interactant intactId="EBI-2339219">
        <id>Q08426</id>
        <label>EHHADH</label>
    </interactant>
    <organismsDiffer>false</organismsDiffer>
    <experiments>4</experiments>
</comment>
<comment type="interaction">
    <interactant intactId="EBI-357849">
        <id>Q15025</id>
    </interactant>
    <interactant intactId="EBI-742350">
        <id>Q14241</id>
        <label>ELOA</label>
    </interactant>
    <organismsDiffer>false</organismsDiffer>
    <experiments>3</experiments>
</comment>
<comment type="interaction">
    <interactant intactId="EBI-357849">
        <id>Q15025</id>
    </interactant>
    <interactant intactId="EBI-719941">
        <id>Q3B820</id>
        <label>FAM161A</label>
    </interactant>
    <organismsDiffer>false</organismsDiffer>
    <experiments>6</experiments>
</comment>
<comment type="interaction">
    <interactant intactId="EBI-357849">
        <id>Q15025</id>
    </interactant>
    <interactant intactId="EBI-7957930">
        <id>Q92567</id>
        <label>FAM168A</label>
    </interactant>
    <organismsDiffer>false</organismsDiffer>
    <experiments>3</experiments>
</comment>
<comment type="interaction">
    <interactant intactId="EBI-357849">
        <id>Q15025</id>
    </interactant>
    <interactant intactId="EBI-746969">
        <id>Q9H0R8</id>
        <label>GABARAPL1</label>
    </interactant>
    <organismsDiffer>false</organismsDiffer>
    <experiments>7</experiments>
</comment>
<comment type="interaction">
    <interactant intactId="EBI-357849">
        <id>Q15025</id>
    </interactant>
    <interactant intactId="EBI-720116">
        <id>P60520</id>
        <label>GABARAPL2</label>
    </interactant>
    <organismsDiffer>false</organismsDiffer>
    <experiments>6</experiments>
</comment>
<comment type="interaction">
    <interactant intactId="EBI-357849">
        <id>Q15025</id>
    </interactant>
    <interactant intactId="EBI-1046878">
        <id>Q14161</id>
        <label>GIT2</label>
    </interactant>
    <organismsDiffer>false</organismsDiffer>
    <experiments>3</experiments>
</comment>
<comment type="interaction">
    <interactant intactId="EBI-357849">
        <id>Q15025</id>
    </interactant>
    <interactant intactId="EBI-389564">
        <id>Q00403</id>
        <label>GTF2B</label>
    </interactant>
    <organismsDiffer>false</organismsDiffer>
    <experiments>7</experiments>
</comment>
<comment type="interaction">
    <interactant intactId="EBI-357849">
        <id>Q15025</id>
    </interactant>
    <interactant intactId="EBI-750003">
        <id>Q8N4P3</id>
        <label>HDDC3</label>
    </interactant>
    <organismsDiffer>false</organismsDiffer>
    <experiments>5</experiments>
</comment>
<comment type="interaction">
    <interactant intactId="EBI-357849">
        <id>Q15025</id>
    </interactant>
    <interactant intactId="EBI-81279">
        <id>Q9Y6K9</id>
        <label>IKBKG</label>
    </interactant>
    <organismsDiffer>false</organismsDiffer>
    <experiments>6</experiments>
</comment>
<comment type="interaction">
    <interactant intactId="EBI-357849">
        <id>Q15025</id>
    </interactant>
    <interactant intactId="EBI-2125614">
        <id>Q9BVG8</id>
        <label>KIFC3</label>
    </interactant>
    <organismsDiffer>false</organismsDiffer>
    <experiments>3</experiments>
</comment>
<comment type="interaction">
    <interactant intactId="EBI-357849">
        <id>Q15025</id>
    </interactant>
    <interactant intactId="EBI-14069005">
        <id>Q9BVG8-5</id>
        <label>KIFC3</label>
    </interactant>
    <organismsDiffer>false</organismsDiffer>
    <experiments>3</experiments>
</comment>
<comment type="interaction">
    <interactant intactId="EBI-357849">
        <id>Q15025</id>
    </interactant>
    <interactant intactId="EBI-12020132">
        <id>Q7Z4W3</id>
        <label>KRTAP19-3</label>
    </interactant>
    <organismsDiffer>false</organismsDiffer>
    <experiments>3</experiments>
</comment>
<comment type="interaction">
    <interactant intactId="EBI-357849">
        <id>Q15025</id>
    </interactant>
    <interactant intactId="EBI-1048945">
        <id>Q3LI72</id>
        <label>KRTAP19-5</label>
    </interactant>
    <organismsDiffer>false</organismsDiffer>
    <experiments>3</experiments>
</comment>
<comment type="interaction">
    <interactant intactId="EBI-357849">
        <id>Q15025</id>
    </interactant>
    <interactant intactId="EBI-10241353">
        <id>Q3SYF9</id>
        <label>KRTAP19-7</label>
    </interactant>
    <organismsDiffer>false</organismsDiffer>
    <experiments>3</experiments>
</comment>
<comment type="interaction">
    <interactant intactId="EBI-357849">
        <id>Q15025</id>
    </interactant>
    <interactant intactId="EBI-12111050">
        <id>Q3LI64</id>
        <label>KRTAP6-1</label>
    </interactant>
    <organismsDiffer>false</organismsDiffer>
    <experiments>3</experiments>
</comment>
<comment type="interaction">
    <interactant intactId="EBI-357849">
        <id>Q15025</id>
    </interactant>
    <interactant intactId="EBI-11962084">
        <id>Q3LI66</id>
        <label>KRTAP6-2</label>
    </interactant>
    <organismsDiffer>false</organismsDiffer>
    <experiments>6</experiments>
</comment>
<comment type="interaction">
    <interactant intactId="EBI-357849">
        <id>Q15025</id>
    </interactant>
    <interactant intactId="EBI-22311199">
        <id>Q3LI67</id>
        <label>KRTAP6-3</label>
    </interactant>
    <organismsDiffer>false</organismsDiffer>
    <experiments>3</experiments>
</comment>
<comment type="interaction">
    <interactant intactId="EBI-357849">
        <id>Q15025</id>
    </interactant>
    <interactant intactId="EBI-10261141">
        <id>Q8IUC2</id>
        <label>KRTAP8-1</label>
    </interactant>
    <organismsDiffer>false</organismsDiffer>
    <experiments>3</experiments>
</comment>
<comment type="interaction">
    <interactant intactId="EBI-357849">
        <id>Q15025</id>
    </interactant>
    <interactant intactId="EBI-739546">
        <id>Q96PV6</id>
        <label>LENG8</label>
    </interactant>
    <organismsDiffer>false</organismsDiffer>
    <experiments>3</experiments>
</comment>
<comment type="interaction">
    <interactant intactId="EBI-357849">
        <id>Q15025</id>
    </interactant>
    <interactant intactId="EBI-725647">
        <id>Q99732</id>
        <label>LITAF</label>
    </interactant>
    <organismsDiffer>false</organismsDiffer>
    <experiments>3</experiments>
</comment>
<comment type="interaction">
    <interactant intactId="EBI-357849">
        <id>Q15025</id>
    </interactant>
    <interactant intactId="EBI-741835">
        <id>Q96M61</id>
        <label>MAGEB18</label>
    </interactant>
    <organismsDiffer>false</organismsDiffer>
    <experiments>5</experiments>
</comment>
<comment type="interaction">
    <interactant intactId="EBI-357849">
        <id>Q15025</id>
    </interactant>
    <interactant intactId="EBI-473834">
        <id>Q9H213</id>
        <label>MAGEH1</label>
    </interactant>
    <organismsDiffer>false</organismsDiffer>
    <experiments>3</experiments>
</comment>
<comment type="interaction">
    <interactant intactId="EBI-357849">
        <id>Q15025</id>
    </interactant>
    <interactant intactId="EBI-720768">
        <id>Q9H492</id>
        <label>MAP1LC3A</label>
    </interactant>
    <organismsDiffer>false</organismsDiffer>
    <experiments>7</experiments>
</comment>
<comment type="interaction">
    <interactant intactId="EBI-357849">
        <id>Q15025</id>
    </interactant>
    <interactant intactId="EBI-373144">
        <id>Q9GZQ8</id>
        <label>MAP1LC3B</label>
    </interactant>
    <organismsDiffer>false</organismsDiffer>
    <experiments>4</experiments>
</comment>
<comment type="interaction">
    <interactant intactId="EBI-357849">
        <id>Q15025</id>
    </interactant>
    <interactant intactId="EBI-2603996">
        <id>Q9BXW4</id>
        <label>MAP1LC3C</label>
    </interactant>
    <organismsDiffer>false</organismsDiffer>
    <experiments>3</experiments>
</comment>
<comment type="interaction">
    <interactant intactId="EBI-357849">
        <id>Q15025</id>
    </interactant>
    <interactant intactId="EBI-348259">
        <id>Q96EZ8</id>
        <label>MCRS1</label>
    </interactant>
    <organismsDiffer>false</organismsDiffer>
    <experiments>3</experiments>
</comment>
<comment type="interaction">
    <interactant intactId="EBI-357849">
        <id>Q15025</id>
    </interactant>
    <interactant intactId="EBI-2558745">
        <id>Q7L9L4</id>
        <label>MOB1B</label>
    </interactant>
    <organismsDiffer>false</organismsDiffer>
    <experiments>3</experiments>
</comment>
<comment type="interaction">
    <interactant intactId="EBI-357849">
        <id>Q15025</id>
    </interactant>
    <interactant intactId="EBI-9679267">
        <id>Q70IA8</id>
        <label>MOB3C</label>
    </interactant>
    <organismsDiffer>false</organismsDiffer>
    <experiments>3</experiments>
</comment>
<comment type="interaction">
    <interactant intactId="EBI-357849">
        <id>Q15025</id>
    </interactant>
    <interactant intactId="EBI-399246">
        <id>Q9UBU8</id>
        <label>MORF4L1</label>
    </interactant>
    <organismsDiffer>false</organismsDiffer>
    <experiments>4</experiments>
</comment>
<comment type="interaction">
    <interactant intactId="EBI-357849">
        <id>Q15025</id>
    </interactant>
    <interactant intactId="EBI-399257">
        <id>Q15014</id>
        <label>MORF4L2</label>
    </interactant>
    <organismsDiffer>false</organismsDiffer>
    <experiments>4</experiments>
</comment>
<comment type="interaction">
    <interactant intactId="EBI-357849">
        <id>Q15025</id>
    </interactant>
    <interactant intactId="EBI-715849">
        <id>O14777</id>
        <label>NDC80</label>
    </interactant>
    <organismsDiffer>false</organismsDiffer>
    <experiments>9</experiments>
</comment>
<comment type="interaction">
    <interactant intactId="EBI-357849">
        <id>Q15025</id>
    </interactant>
    <interactant intactId="EBI-300010">
        <id>P19838</id>
        <label>NFKB1</label>
    </interactant>
    <organismsDiffer>false</organismsDiffer>
    <experiments>6</experiments>
</comment>
<comment type="interaction">
    <interactant intactId="EBI-357849">
        <id>Q15025</id>
    </interactant>
    <interactant intactId="EBI-2561019">
        <id>Q9BYG3</id>
        <label>NIFK</label>
    </interactant>
    <organismsDiffer>false</organismsDiffer>
    <experiments>3</experiments>
</comment>
<comment type="interaction">
    <interactant intactId="EBI-357849">
        <id>Q15025</id>
    </interactant>
    <interactant intactId="EBI-744782">
        <id>Q9Y5B8</id>
        <label>NME7</label>
    </interactant>
    <organismsDiffer>false</organismsDiffer>
    <experiments>8</experiments>
</comment>
<comment type="interaction">
    <interactant intactId="EBI-357849">
        <id>Q15025</id>
    </interactant>
    <interactant intactId="EBI-748974">
        <id>Q96CV9</id>
        <label>OPTN</label>
    </interactant>
    <organismsDiffer>false</organismsDiffer>
    <experiments>22</experiments>
</comment>
<comment type="interaction">
    <interactant intactId="EBI-357849">
        <id>Q15025</id>
    </interactant>
    <interactant intactId="EBI-14066006">
        <id>Q4G0R1</id>
        <label>PIBF1</label>
    </interactant>
    <organismsDiffer>false</organismsDiffer>
    <experiments>3</experiments>
</comment>
<comment type="interaction">
    <interactant intactId="EBI-357849">
        <id>Q15025</id>
    </interactant>
    <interactant intactId="EBI-714158">
        <id>Q13526</id>
        <label>PIN1</label>
    </interactant>
    <organismsDiffer>false</organismsDiffer>
    <experiments>7</experiments>
</comment>
<comment type="interaction">
    <interactant intactId="EBI-357849">
        <id>Q15025</id>
    </interactant>
    <interactant intactId="EBI-1045072">
        <id>Q96T60</id>
        <label>PNKP</label>
    </interactant>
    <organismsDiffer>false</organismsDiffer>
    <experiments>6</experiments>
</comment>
<comment type="interaction">
    <interactant intactId="EBI-357849">
        <id>Q15025</id>
    </interactant>
    <interactant intactId="EBI-749285">
        <id>Q15311</id>
        <label>RALBP1</label>
    </interactant>
    <organismsDiffer>false</organismsDiffer>
    <experiments>4</experiments>
</comment>
<comment type="interaction">
    <interactant intactId="EBI-357849">
        <id>Q15025</id>
    </interactant>
    <interactant intactId="EBI-373337">
        <id>O76064</id>
        <label>RNF8</label>
    </interactant>
    <organismsDiffer>false</organismsDiffer>
    <experiments>3</experiments>
</comment>
<comment type="interaction">
    <interactant intactId="EBI-357849">
        <id>Q15025</id>
    </interactant>
    <interactant intactId="EBI-12097232">
        <id>A0MZ66-4</id>
        <label>SHTN1</label>
    </interactant>
    <organismsDiffer>false</organismsDiffer>
    <experiments>3</experiments>
</comment>
<comment type="interaction">
    <interactant intactId="EBI-357849">
        <id>Q15025</id>
    </interactant>
    <interactant intactId="EBI-749336">
        <id>Q8TAD8</id>
        <label>SNIP1</label>
    </interactant>
    <organismsDiffer>false</organismsDiffer>
    <experiments>4</experiments>
</comment>
<comment type="interaction">
    <interactant intactId="EBI-357849">
        <id>Q15025</id>
    </interactant>
    <interactant intactId="EBI-744066">
        <id>Q9UM82</id>
        <label>SPATA2</label>
    </interactant>
    <organismsDiffer>false</organismsDiffer>
    <experiments>3</experiments>
</comment>
<comment type="interaction">
    <interactant intactId="EBI-357849">
        <id>Q15025</id>
    </interactant>
    <interactant intactId="EBI-10246152">
        <id>Q5T7P8-2</id>
        <label>SYT6</label>
    </interactant>
    <organismsDiffer>false</organismsDiffer>
    <experiments>3</experiments>
</comment>
<comment type="interaction">
    <interactant intactId="EBI-357849">
        <id>Q15025</id>
    </interactant>
    <interactant intactId="EBI-529518">
        <id>Q86VP1</id>
        <label>TAX1BP1</label>
    </interactant>
    <organismsDiffer>false</organismsDiffer>
    <experiments>8</experiments>
</comment>
<comment type="interaction">
    <interactant intactId="EBI-357849">
        <id>Q15025</id>
    </interactant>
    <interactant intactId="EBI-710310">
        <id>Q15560</id>
        <label>TCEA2</label>
    </interactant>
    <organismsDiffer>false</organismsDiffer>
    <experiments>8</experiments>
</comment>
<comment type="interaction">
    <interactant intactId="EBI-357849">
        <id>Q15025</id>
    </interactant>
    <interactant intactId="EBI-11955057">
        <id>Q8N8B7-2</id>
        <label>TCEANC</label>
    </interactant>
    <organismsDiffer>false</organismsDiffer>
    <experiments>3</experiments>
</comment>
<comment type="interaction">
    <interactant intactId="EBI-357849">
        <id>Q15025</id>
    </interactant>
    <interactant intactId="EBI-5462748">
        <id>Q96MN5</id>
        <label>TCEANC2</label>
    </interactant>
    <organismsDiffer>false</organismsDiffer>
    <experiments>4</experiments>
</comment>
<comment type="interaction">
    <interactant intactId="EBI-357849">
        <id>Q15025</id>
    </interactant>
    <interactant intactId="EBI-527670">
        <id>P21580</id>
        <label>TNFAIP3</label>
    </interactant>
    <organismsDiffer>false</organismsDiffer>
    <experiments>11</experiments>
</comment>
<comment type="interaction">
    <interactant intactId="EBI-357849">
        <id>Q15025</id>
    </interactant>
    <interactant intactId="EBI-357849">
        <id>Q15025</id>
        <label>TNIP1</label>
    </interactant>
    <organismsDiffer>false</organismsDiffer>
    <experiments>7</experiments>
</comment>
<comment type="interaction">
    <interactant intactId="EBI-357849">
        <id>Q15025</id>
    </interactant>
    <interactant intactId="EBI-2509913">
        <id>Q96KP6</id>
        <label>TNIP3</label>
    </interactant>
    <organismsDiffer>false</organismsDiffer>
    <experiments>6</experiments>
</comment>
<comment type="interaction">
    <interactant intactId="EBI-357849">
        <id>Q15025</id>
    </interactant>
    <interactant intactId="EBI-346882">
        <id>Q99816</id>
        <label>TSG101</label>
    </interactant>
    <organismsDiffer>false</organismsDiffer>
    <experiments>4</experiments>
</comment>
<comment type="interaction">
    <interactant intactId="EBI-357849">
        <id>Q15025</id>
    </interactant>
    <interactant intactId="EBI-12259184">
        <id>Q5SRH9-6</id>
        <label>TTC39A</label>
    </interactant>
    <organismsDiffer>false</organismsDiffer>
    <experiments>3</experiments>
</comment>
<comment type="interaction">
    <interactant intactId="EBI-357849">
        <id>Q15025</id>
    </interactant>
    <interactant intactId="EBI-11980463">
        <id>Q9UNY4-2</id>
        <label>TTF2</label>
    </interactant>
    <organismsDiffer>false</organismsDiffer>
    <experiments>3</experiments>
</comment>
<comment type="interaction">
    <interactant intactId="EBI-357849">
        <id>Q15025</id>
    </interactant>
    <interactant intactId="EBI-359793">
        <id>P40222</id>
        <label>TXLNA</label>
    </interactant>
    <organismsDiffer>false</organismsDiffer>
    <experiments>6</experiments>
</comment>
<comment type="interaction">
    <interactant intactId="EBI-357849">
        <id>Q15025</id>
    </interactant>
    <interactant intactId="EBI-749072">
        <id>Q9H267</id>
        <label>VPS33B</label>
    </interactant>
    <organismsDiffer>false</organismsDiffer>
    <experiments>9</experiments>
</comment>
<comment type="interaction">
    <interactant intactId="EBI-357849">
        <id>Q15025</id>
    </interactant>
    <interactant intactId="EBI-751647">
        <id>Q15007</id>
        <label>WTAP</label>
    </interactant>
    <organismsDiffer>false</organismsDiffer>
    <experiments>3</experiments>
</comment>
<comment type="interaction">
    <interactant intactId="EBI-357849">
        <id>Q15025</id>
    </interactant>
    <interactant intactId="EBI-739899">
        <id>P24278</id>
        <label>ZBTB25</label>
    </interactant>
    <organismsDiffer>false</organismsDiffer>
    <experiments>6</experiments>
</comment>
<comment type="interaction">
    <interactant intactId="EBI-357849">
        <id>Q15025</id>
    </interactant>
    <interactant intactId="EBI-2682299">
        <id>Q96NC0</id>
        <label>ZMAT2</label>
    </interactant>
    <organismsDiffer>false</organismsDiffer>
    <experiments>3</experiments>
</comment>
<comment type="interaction">
    <interactant intactId="EBI-357849">
        <id>Q15025</id>
    </interactant>
    <interactant intactId="EBI-347522">
        <id>O43257</id>
        <label>ZNHIT1</label>
    </interactant>
    <organismsDiffer>false</organismsDiffer>
    <experiments>3</experiments>
</comment>
<comment type="interaction">
    <interactant intactId="EBI-357849">
        <id>Q15025</id>
    </interactant>
    <interactant intactId="EBI-6125799">
        <id>Q8VSC3</id>
        <label>ipaH9.8</label>
    </interactant>
    <organismsDiffer>true</organismsDiffer>
    <experiments>4</experiments>
</comment>
<comment type="subcellular location">
    <subcellularLocation>
        <location>Cytoplasm</location>
    </subcellularLocation>
    <subcellularLocation>
        <location>Nucleus</location>
    </subcellularLocation>
    <text>Shuttles between the nucleus and cytoplasm in a CRM1-dependent manner.</text>
</comment>
<comment type="alternative products">
    <event type="alternative splicing"/>
    <isoform>
        <id>Q15025-1</id>
        <name>1</name>
        <name>Alpha</name>
        <name>FL</name>
        <sequence type="displayed"/>
    </isoform>
    <isoform>
        <id>Q15025-2</id>
        <name>2</name>
        <name>Beta</name>
        <sequence type="described" ref="VSP_003913"/>
    </isoform>
    <isoform>
        <id>Q15025-3</id>
        <name>3</name>
        <sequence type="described" ref="VSP_045296"/>
    </isoform>
    <isoform>
        <id>Q15025-4</id>
        <name>4</name>
        <name>Alpha2</name>
        <sequence type="described" ref="VSP_055208"/>
    </isoform>
    <isoform>
        <id>Q15025-5</id>
        <name>5</name>
        <name>Alpha4</name>
        <sequence type="described" ref="VSP_055209 VSP_055214"/>
    </isoform>
    <isoform>
        <id>Q15025-6</id>
        <name>6</name>
        <name>Beta2</name>
        <sequence type="described" ref="VSP_055208 VSP_003913"/>
    </isoform>
    <isoform>
        <id>Q15025-7</id>
        <name>7</name>
        <name>Alpha3</name>
        <name>Beta3</name>
        <sequence type="described" ref="VSP_055211 VSP_055212"/>
    </isoform>
    <isoform>
        <id>Q15025-8</id>
        <name>8</name>
        <name>Beta4</name>
        <sequence type="described" ref="VSP_055210 VSP_055213"/>
    </isoform>
    <text>Additional isoforms seem to exist.</text>
</comment>
<comment type="tissue specificity">
    <text evidence="7">Ubiquitous. Strongly expressed in peripheral blood lymphocytes, spleen and skeletal muscle, and is weakly expressed in the brain. In peripheral blood mononucleocytes, isoform 4 is mainly expressed and isoform 1 and isoform 7 are almost not expressed. Expression of isoform 1 and isoform 7 increases in leukemic cells.</text>
</comment>
<comment type="PTM">
    <text evidence="8">Phosphorylation at Tyr-552 by SRC-family kinases recruits phosphoinositide-3-kinase (PI3K) PIK3CD:p85 heterodimer which results in integrin activation and leukocyte adhesion to activated endothelium during inflammation.</text>
</comment>
<comment type="miscellaneous">
    <molecule>Isoform 5</molecule>
    <text evidence="18">Less effective in the NF-kappa-B inhibitory effect.</text>
</comment>
<comment type="sequence caution" evidence="18">
    <conflict type="frameshift">
        <sequence resource="EMBL-CDS" id="AAB41438"/>
    </conflict>
</comment>
<gene>
    <name type="primary">TNIP1</name>
    <name type="synonym">KIAA0113</name>
    <name type="synonym">NAF1</name>
</gene>
<accession>Q15025</accession>
<accession>A4F1W8</accession>
<accession>A4F1W9</accession>
<accession>A4F1X2</accession>
<accession>A4F1X4</accession>
<accession>A4F1X5</accession>
<accession>A4F1X6</accession>
<accession>A4F1X7</accession>
<accession>A4F1X9</accession>
<accession>B7Z699</accession>
<accession>E7EPY1</accession>
<accession>E7ET96</accession>
<accession>O76008</accession>
<accession>Q05KP3</accession>
<accession>Q05KP4</accession>
<accession>Q6N077</accession>
<accession>Q96EL9</accession>
<accession>Q99833</accession>
<accession>Q9H1J3</accession>
<dbReference type="EMBL" id="AJ011895">
    <property type="protein sequence ID" value="CAA09855.1"/>
    <property type="molecule type" value="mRNA"/>
</dbReference>
<dbReference type="EMBL" id="AJ011896">
    <property type="protein sequence ID" value="CAA09856.1"/>
    <property type="molecule type" value="mRNA"/>
</dbReference>
<dbReference type="EMBL" id="AY012155">
    <property type="protein sequence ID" value="AAG42154.1"/>
    <property type="molecule type" value="mRNA"/>
</dbReference>
<dbReference type="EMBL" id="AB177543">
    <property type="protein sequence ID" value="BAF34946.1"/>
    <property type="molecule type" value="mRNA"/>
</dbReference>
<dbReference type="EMBL" id="AB177544">
    <property type="protein sequence ID" value="BAF34947.1"/>
    <property type="molecule type" value="mRNA"/>
</dbReference>
<dbReference type="EMBL" id="AB252970">
    <property type="protein sequence ID" value="BAF48787.1"/>
    <property type="molecule type" value="mRNA"/>
</dbReference>
<dbReference type="EMBL" id="AB252971">
    <property type="protein sequence ID" value="BAF48788.1"/>
    <property type="molecule type" value="mRNA"/>
</dbReference>
<dbReference type="EMBL" id="AB252972">
    <property type="protein sequence ID" value="BAF48789.1"/>
    <property type="molecule type" value="mRNA"/>
</dbReference>
<dbReference type="EMBL" id="AB252973">
    <property type="protein sequence ID" value="BAF48790.1"/>
    <property type="molecule type" value="mRNA"/>
</dbReference>
<dbReference type="EMBL" id="AB252974">
    <property type="protein sequence ID" value="BAF48791.1"/>
    <property type="molecule type" value="mRNA"/>
</dbReference>
<dbReference type="EMBL" id="AB252975">
    <property type="protein sequence ID" value="BAF48792.1"/>
    <property type="molecule type" value="mRNA"/>
</dbReference>
<dbReference type="EMBL" id="AB252976">
    <property type="protein sequence ID" value="BAF48793.1"/>
    <property type="molecule type" value="mRNA"/>
</dbReference>
<dbReference type="EMBL" id="AB252977">
    <property type="protein sequence ID" value="BAF48794.1"/>
    <property type="molecule type" value="mRNA"/>
</dbReference>
<dbReference type="EMBL" id="AB252978">
    <property type="protein sequence ID" value="BAF48795.1"/>
    <property type="molecule type" value="mRNA"/>
</dbReference>
<dbReference type="EMBL" id="AB252979">
    <property type="protein sequence ID" value="BAF48796.1"/>
    <property type="molecule type" value="mRNA"/>
</dbReference>
<dbReference type="EMBL" id="AB252980">
    <property type="protein sequence ID" value="BAF48797.1"/>
    <property type="molecule type" value="mRNA"/>
</dbReference>
<dbReference type="EMBL" id="AB252981">
    <property type="protein sequence ID" value="BAF48798.1"/>
    <property type="molecule type" value="mRNA"/>
</dbReference>
<dbReference type="EMBL" id="D30755">
    <property type="protein sequence ID" value="BAA06416.2"/>
    <property type="molecule type" value="mRNA"/>
</dbReference>
<dbReference type="EMBL" id="AK299975">
    <property type="protein sequence ID" value="BAH13185.1"/>
    <property type="molecule type" value="mRNA"/>
</dbReference>
<dbReference type="EMBL" id="BX640647">
    <property type="protein sequence ID" value="CAE45793.1"/>
    <property type="molecule type" value="mRNA"/>
</dbReference>
<dbReference type="EMBL" id="AC008641">
    <property type="status" value="NOT_ANNOTATED_CDS"/>
    <property type="molecule type" value="Genomic_DNA"/>
</dbReference>
<dbReference type="EMBL" id="CH471062">
    <property type="protein sequence ID" value="EAW61688.1"/>
    <property type="molecule type" value="Genomic_DNA"/>
</dbReference>
<dbReference type="EMBL" id="CH471062">
    <property type="protein sequence ID" value="EAW61689.1"/>
    <property type="molecule type" value="Genomic_DNA"/>
</dbReference>
<dbReference type="EMBL" id="CH471062">
    <property type="protein sequence ID" value="EAW61690.1"/>
    <property type="molecule type" value="Genomic_DNA"/>
</dbReference>
<dbReference type="EMBL" id="CH471062">
    <property type="protein sequence ID" value="EAW61691.1"/>
    <property type="molecule type" value="Genomic_DNA"/>
</dbReference>
<dbReference type="EMBL" id="BC012133">
    <property type="protein sequence ID" value="AAH12133.1"/>
    <property type="molecule type" value="mRNA"/>
</dbReference>
<dbReference type="EMBL" id="BC014008">
    <property type="protein sequence ID" value="AAH14008.1"/>
    <property type="molecule type" value="mRNA"/>
</dbReference>
<dbReference type="EMBL" id="U39403">
    <property type="protein sequence ID" value="AAC99999.1"/>
    <property type="molecule type" value="mRNA"/>
</dbReference>
<dbReference type="EMBL" id="U83844">
    <property type="protein sequence ID" value="AAB41438.1"/>
    <property type="status" value="ALT_FRAME"/>
    <property type="molecule type" value="mRNA"/>
</dbReference>
<dbReference type="CCDS" id="CCDS34280.1">
    <molecule id="Q15025-1"/>
</dbReference>
<dbReference type="CCDS" id="CCDS58982.1">
    <molecule id="Q15025-3"/>
</dbReference>
<dbReference type="CCDS" id="CCDS58983.1">
    <molecule id="Q15025-5"/>
</dbReference>
<dbReference type="CCDS" id="CCDS58984.1">
    <molecule id="Q15025-4"/>
</dbReference>
<dbReference type="CCDS" id="CCDS58985.1">
    <molecule id="Q15025-2"/>
</dbReference>
<dbReference type="RefSeq" id="NP_001239314.1">
    <property type="nucleotide sequence ID" value="NM_001252385.1"/>
</dbReference>
<dbReference type="RefSeq" id="NP_001239315.1">
    <molecule id="Q15025-3"/>
    <property type="nucleotide sequence ID" value="NM_001252386.2"/>
</dbReference>
<dbReference type="RefSeq" id="NP_001239319.1">
    <molecule id="Q15025-1"/>
    <property type="nucleotide sequence ID" value="NM_001252390.2"/>
</dbReference>
<dbReference type="RefSeq" id="NP_001239320.1">
    <molecule id="Q15025-1"/>
    <property type="nucleotide sequence ID" value="NM_001252391.2"/>
</dbReference>
<dbReference type="RefSeq" id="NP_001239321.1">
    <molecule id="Q15025-2"/>
    <property type="nucleotide sequence ID" value="NM_001252392.2"/>
</dbReference>
<dbReference type="RefSeq" id="NP_001239322.1">
    <molecule id="Q15025-2"/>
    <property type="nucleotide sequence ID" value="NM_001252393.2"/>
</dbReference>
<dbReference type="RefSeq" id="NP_001245383.1">
    <molecule id="Q15025-1"/>
    <property type="nucleotide sequence ID" value="NM_001258454.2"/>
</dbReference>
<dbReference type="RefSeq" id="NP_001245384.1">
    <molecule id="Q15025-4"/>
    <property type="nucleotide sequence ID" value="NM_001258455.1"/>
</dbReference>
<dbReference type="RefSeq" id="NP_001245385.1">
    <molecule id="Q15025-5"/>
    <property type="nucleotide sequence ID" value="NM_001258456.1"/>
</dbReference>
<dbReference type="RefSeq" id="NP_001351416.1">
    <molecule id="Q15025-4"/>
    <property type="nucleotide sequence ID" value="NM_001364487.2"/>
</dbReference>
<dbReference type="RefSeq" id="NP_006049.3">
    <molecule id="Q15025-1"/>
    <property type="nucleotide sequence ID" value="NM_006058.4"/>
</dbReference>
<dbReference type="RefSeq" id="XP_006714814.1">
    <property type="nucleotide sequence ID" value="XM_006714751.1"/>
</dbReference>
<dbReference type="RefSeq" id="XP_006714815.1">
    <molecule id="Q15025-6"/>
    <property type="nucleotide sequence ID" value="XM_006714752.4"/>
</dbReference>
<dbReference type="RefSeq" id="XP_047272571.1">
    <molecule id="Q15025-1"/>
    <property type="nucleotide sequence ID" value="XM_047416615.1"/>
</dbReference>
<dbReference type="RefSeq" id="XP_047272572.1">
    <molecule id="Q15025-1"/>
    <property type="nucleotide sequence ID" value="XM_047416616.1"/>
</dbReference>
<dbReference type="RefSeq" id="XP_047272573.1">
    <molecule id="Q15025-1"/>
    <property type="nucleotide sequence ID" value="XM_047416617.1"/>
</dbReference>
<dbReference type="RefSeq" id="XP_047272574.1">
    <molecule id="Q15025-1"/>
    <property type="nucleotide sequence ID" value="XM_047416618.1"/>
</dbReference>
<dbReference type="RefSeq" id="XP_047272575.1">
    <molecule id="Q15025-1"/>
    <property type="nucleotide sequence ID" value="XM_047416619.1"/>
</dbReference>
<dbReference type="RefSeq" id="XP_047272576.1">
    <molecule id="Q15025-2"/>
    <property type="nucleotide sequence ID" value="XM_047416620.1"/>
</dbReference>
<dbReference type="RefSeq" id="XP_047272577.1">
    <molecule id="Q15025-2"/>
    <property type="nucleotide sequence ID" value="XM_047416621.1"/>
</dbReference>
<dbReference type="RefSeq" id="XP_047272579.1">
    <molecule id="Q15025-3"/>
    <property type="nucleotide sequence ID" value="XM_047416623.1"/>
</dbReference>
<dbReference type="RefSeq" id="XP_047272581.1">
    <molecule id="Q15025-4"/>
    <property type="nucleotide sequence ID" value="XM_047416625.1"/>
</dbReference>
<dbReference type="RefSeq" id="XP_047272582.1">
    <molecule id="Q15025-4"/>
    <property type="nucleotide sequence ID" value="XM_047416626.1"/>
</dbReference>
<dbReference type="RefSeq" id="XP_054207389.1">
    <molecule id="Q15025-1"/>
    <property type="nucleotide sequence ID" value="XM_054351414.1"/>
</dbReference>
<dbReference type="RefSeq" id="XP_054207390.1">
    <molecule id="Q15025-1"/>
    <property type="nucleotide sequence ID" value="XM_054351415.1"/>
</dbReference>
<dbReference type="RefSeq" id="XP_054207391.1">
    <molecule id="Q15025-1"/>
    <property type="nucleotide sequence ID" value="XM_054351416.1"/>
</dbReference>
<dbReference type="RefSeq" id="XP_054207392.1">
    <molecule id="Q15025-1"/>
    <property type="nucleotide sequence ID" value="XM_054351417.1"/>
</dbReference>
<dbReference type="RefSeq" id="XP_054207393.1">
    <molecule id="Q15025-2"/>
    <property type="nucleotide sequence ID" value="XM_054351418.1"/>
</dbReference>
<dbReference type="RefSeq" id="XP_054207394.1">
    <molecule id="Q15025-2"/>
    <property type="nucleotide sequence ID" value="XM_054351419.1"/>
</dbReference>
<dbReference type="RefSeq" id="XP_054207397.1">
    <molecule id="Q15025-3"/>
    <property type="nucleotide sequence ID" value="XM_054351422.1"/>
</dbReference>
<dbReference type="RefSeq" id="XP_054207399.1">
    <molecule id="Q15025-4"/>
    <property type="nucleotide sequence ID" value="XM_054351424.1"/>
</dbReference>
<dbReference type="RefSeq" id="XP_054207400.1">
    <molecule id="Q15025-4"/>
    <property type="nucleotide sequence ID" value="XM_054351425.1"/>
</dbReference>
<dbReference type="RefSeq" id="XP_054207401.1">
    <molecule id="Q15025-6"/>
    <property type="nucleotide sequence ID" value="XM_054351426.1"/>
</dbReference>
<dbReference type="PDB" id="7EAL">
    <property type="method" value="X-ray"/>
    <property type="resolution" value="2.50 A"/>
    <property type="chains" value="B/C/E/F=405-513"/>
</dbReference>
<dbReference type="PDB" id="7EAO">
    <property type="method" value="X-ray"/>
    <property type="resolution" value="2.90 A"/>
    <property type="chains" value="B/C=415-513"/>
</dbReference>
<dbReference type="PDB" id="7EB9">
    <property type="method" value="X-ray"/>
    <property type="resolution" value="3.20 A"/>
    <property type="chains" value="B/C=415-513"/>
</dbReference>
<dbReference type="PDB" id="8YFK">
    <property type="method" value="X-ray"/>
    <property type="resolution" value="2.00 A"/>
    <property type="chains" value="B/D/F/H=118-128"/>
</dbReference>
<dbReference type="PDB" id="8YFL">
    <property type="method" value="X-ray"/>
    <property type="resolution" value="1.50 A"/>
    <property type="chains" value="B/D=118-128"/>
</dbReference>
<dbReference type="PDB" id="8YFM">
    <property type="method" value="X-ray"/>
    <property type="resolution" value="1.50 A"/>
    <property type="chains" value="B/E=118-128"/>
</dbReference>
<dbReference type="PDB" id="8YFN">
    <property type="method" value="X-ray"/>
    <property type="resolution" value="2.30 A"/>
    <property type="chains" value="B/D=118-133"/>
</dbReference>
<dbReference type="PDB" id="9D34">
    <property type="method" value="X-ray"/>
    <property type="resolution" value="1.42 A"/>
    <property type="chains" value="C=120-132"/>
</dbReference>
<dbReference type="PDBsum" id="7EAL"/>
<dbReference type="PDBsum" id="7EAO"/>
<dbReference type="PDBsum" id="7EB9"/>
<dbReference type="PDBsum" id="8YFK"/>
<dbReference type="PDBsum" id="8YFL"/>
<dbReference type="PDBsum" id="8YFM"/>
<dbReference type="PDBsum" id="8YFN"/>
<dbReference type="PDBsum" id="9D34"/>
<dbReference type="SMR" id="Q15025"/>
<dbReference type="BioGRID" id="115602">
    <property type="interactions" value="1231"/>
</dbReference>
<dbReference type="CORUM" id="Q15025"/>
<dbReference type="DIP" id="DIP-27577N"/>
<dbReference type="FunCoup" id="Q15025">
    <property type="interactions" value="1937"/>
</dbReference>
<dbReference type="IntAct" id="Q15025">
    <property type="interactions" value="182"/>
</dbReference>
<dbReference type="MINT" id="Q15025"/>
<dbReference type="STRING" id="9606.ENSP00000317891"/>
<dbReference type="iPTMnet" id="Q15025"/>
<dbReference type="PhosphoSitePlus" id="Q15025"/>
<dbReference type="BioMuta" id="TNIP1"/>
<dbReference type="DMDM" id="20138952"/>
<dbReference type="jPOST" id="Q15025"/>
<dbReference type="MassIVE" id="Q15025"/>
<dbReference type="PaxDb" id="9606-ENSP00000317891"/>
<dbReference type="PeptideAtlas" id="Q15025"/>
<dbReference type="ProteomicsDB" id="17465"/>
<dbReference type="ProteomicsDB" id="18155"/>
<dbReference type="ProteomicsDB" id="60376">
    <molecule id="Q15025-1"/>
</dbReference>
<dbReference type="ProteomicsDB" id="60377">
    <molecule id="Q15025-2"/>
</dbReference>
<dbReference type="Pumba" id="Q15025"/>
<dbReference type="Antibodypedia" id="28121">
    <property type="antibodies" value="299 antibodies from 28 providers"/>
</dbReference>
<dbReference type="DNASU" id="10318"/>
<dbReference type="Ensembl" id="ENST00000315050.11">
    <molecule id="Q15025-1"/>
    <property type="protein sequence ID" value="ENSP00000317891.7"/>
    <property type="gene ID" value="ENSG00000145901.17"/>
</dbReference>
<dbReference type="Ensembl" id="ENST00000518977.5">
    <molecule id="Q15025-2"/>
    <property type="protein sequence ID" value="ENSP00000430971.1"/>
    <property type="gene ID" value="ENSG00000145901.17"/>
</dbReference>
<dbReference type="Ensembl" id="ENST00000520695.6">
    <molecule id="Q15025-1"/>
    <property type="protein sequence ID" value="ENSP00000430279.2"/>
    <property type="gene ID" value="ENSG00000145901.17"/>
</dbReference>
<dbReference type="Ensembl" id="ENST00000520931.5">
    <molecule id="Q15025-3"/>
    <property type="protein sequence ID" value="ENSP00000429891.1"/>
    <property type="gene ID" value="ENSG00000145901.17"/>
</dbReference>
<dbReference type="Ensembl" id="ENST00000521001.2">
    <molecule id="Q15025-1"/>
    <property type="protein sequence ID" value="ENSP00000428404.2"/>
    <property type="gene ID" value="ENSG00000145901.17"/>
</dbReference>
<dbReference type="Ensembl" id="ENST00000521591.6">
    <molecule id="Q15025-1"/>
    <property type="protein sequence ID" value="ENSP00000430760.1"/>
    <property type="gene ID" value="ENSG00000145901.17"/>
</dbReference>
<dbReference type="Ensembl" id="ENST00000522100.6">
    <molecule id="Q15025-3"/>
    <property type="protein sequence ID" value="ENSP00000428487.2"/>
    <property type="gene ID" value="ENSG00000145901.17"/>
</dbReference>
<dbReference type="Ensembl" id="ENST00000522226.5">
    <molecule id="Q15025-1"/>
    <property type="protein sequence ID" value="ENSP00000428187.1"/>
    <property type="gene ID" value="ENSG00000145901.17"/>
</dbReference>
<dbReference type="Ensembl" id="ENST00000523200.5">
    <molecule id="Q15025-4"/>
    <property type="protein sequence ID" value="ENSP00000431105.1"/>
    <property type="gene ID" value="ENSG00000145901.17"/>
</dbReference>
<dbReference type="Ensembl" id="ENST00000523338.5">
    <molecule id="Q15025-2"/>
    <property type="protein sequence ID" value="ENSP00000428243.1"/>
    <property type="gene ID" value="ENSG00000145901.17"/>
</dbReference>
<dbReference type="Ensembl" id="ENST00000524280.5">
    <molecule id="Q15025-5"/>
    <property type="protein sequence ID" value="ENSP00000429912.1"/>
    <property type="gene ID" value="ENSG00000145901.17"/>
</dbReference>
<dbReference type="Ensembl" id="ENST00000610535.5">
    <molecule id="Q15025-4"/>
    <property type="protein sequence ID" value="ENSP00000483944.1"/>
    <property type="gene ID" value="ENSG00000145901.17"/>
</dbReference>
<dbReference type="GeneID" id="10318"/>
<dbReference type="KEGG" id="hsa:10318"/>
<dbReference type="MANE-Select" id="ENST00000521591.6">
    <property type="protein sequence ID" value="ENSP00000430760.1"/>
    <property type="RefSeq nucleotide sequence ID" value="NM_006058.5"/>
    <property type="RefSeq protein sequence ID" value="NP_006049.3"/>
</dbReference>
<dbReference type="UCSC" id="uc003ltg.5">
    <molecule id="Q15025-1"/>
    <property type="organism name" value="human"/>
</dbReference>
<dbReference type="AGR" id="HGNC:16903"/>
<dbReference type="CTD" id="10318"/>
<dbReference type="DisGeNET" id="10318"/>
<dbReference type="GeneCards" id="TNIP1"/>
<dbReference type="HGNC" id="HGNC:16903">
    <property type="gene designation" value="TNIP1"/>
</dbReference>
<dbReference type="HPA" id="ENSG00000145901">
    <property type="expression patterns" value="Low tissue specificity"/>
</dbReference>
<dbReference type="MalaCards" id="TNIP1"/>
<dbReference type="MIM" id="607714">
    <property type="type" value="gene"/>
</dbReference>
<dbReference type="neXtProt" id="NX_Q15025"/>
<dbReference type="NIAGADS" id="ENSG00000145901"/>
<dbReference type="OpenTargets" id="ENSG00000145901"/>
<dbReference type="Orphanet" id="536">
    <property type="disease" value="Systemic lupus erythematosus"/>
</dbReference>
<dbReference type="PharmGKB" id="PA128394573"/>
<dbReference type="VEuPathDB" id="HostDB:ENSG00000145901"/>
<dbReference type="eggNOG" id="ENOG502QPYT">
    <property type="taxonomic scope" value="Eukaryota"/>
</dbReference>
<dbReference type="GeneTree" id="ENSGT00510000046908"/>
<dbReference type="HOGENOM" id="CLU_033970_0_0_1"/>
<dbReference type="InParanoid" id="Q15025"/>
<dbReference type="OMA" id="ERGNMEG"/>
<dbReference type="OrthoDB" id="10059994at2759"/>
<dbReference type="PAN-GO" id="Q15025">
    <property type="GO annotations" value="5 GO annotations based on evolutionary models"/>
</dbReference>
<dbReference type="PhylomeDB" id="Q15025"/>
<dbReference type="TreeFam" id="TF351138"/>
<dbReference type="PathwayCommons" id="Q15025"/>
<dbReference type="Reactome" id="R-HSA-5689896">
    <property type="pathway name" value="Ovarian tumor domain proteases"/>
</dbReference>
<dbReference type="SignaLink" id="Q15025"/>
<dbReference type="SIGNOR" id="Q15025"/>
<dbReference type="BioGRID-ORCS" id="10318">
    <property type="hits" value="19 hits in 1157 CRISPR screens"/>
</dbReference>
<dbReference type="ChiTaRS" id="TNIP1">
    <property type="organism name" value="human"/>
</dbReference>
<dbReference type="GeneWiki" id="TNIP1"/>
<dbReference type="GenomeRNAi" id="10318"/>
<dbReference type="Pharos" id="Q15025">
    <property type="development level" value="Tbio"/>
</dbReference>
<dbReference type="PRO" id="PR:Q15025"/>
<dbReference type="Proteomes" id="UP000005640">
    <property type="component" value="Chromosome 5"/>
</dbReference>
<dbReference type="RNAct" id="Q15025">
    <property type="molecule type" value="protein"/>
</dbReference>
<dbReference type="Bgee" id="ENSG00000145901">
    <property type="expression patterns" value="Expressed in lower esophagus mucosa and 209 other cell types or tissues"/>
</dbReference>
<dbReference type="ExpressionAtlas" id="Q15025">
    <property type="expression patterns" value="baseline and differential"/>
</dbReference>
<dbReference type="GO" id="GO:0005829">
    <property type="term" value="C:cytosol"/>
    <property type="evidence" value="ECO:0000314"/>
    <property type="project" value="HPA"/>
</dbReference>
<dbReference type="GO" id="GO:0005654">
    <property type="term" value="C:nucleoplasm"/>
    <property type="evidence" value="ECO:0000314"/>
    <property type="project" value="HPA"/>
</dbReference>
<dbReference type="GO" id="GO:0042802">
    <property type="term" value="F:identical protein binding"/>
    <property type="evidence" value="ECO:0000353"/>
    <property type="project" value="IntAct"/>
</dbReference>
<dbReference type="GO" id="GO:0051019">
    <property type="term" value="F:mitogen-activated protein kinase binding"/>
    <property type="evidence" value="ECO:0000314"/>
    <property type="project" value="UniProtKB"/>
</dbReference>
<dbReference type="GO" id="GO:0071222">
    <property type="term" value="P:cellular response to lipopolysaccharide"/>
    <property type="evidence" value="ECO:0000318"/>
    <property type="project" value="GO_Central"/>
</dbReference>
<dbReference type="GO" id="GO:0006952">
    <property type="term" value="P:defense response"/>
    <property type="evidence" value="ECO:0000304"/>
    <property type="project" value="ProtInc"/>
</dbReference>
<dbReference type="GO" id="GO:0009101">
    <property type="term" value="P:glycoprotein biosynthetic process"/>
    <property type="evidence" value="ECO:0000314"/>
    <property type="project" value="UniProtKB"/>
</dbReference>
<dbReference type="GO" id="GO:0006954">
    <property type="term" value="P:inflammatory response"/>
    <property type="evidence" value="ECO:0007669"/>
    <property type="project" value="UniProtKB-KW"/>
</dbReference>
<dbReference type="GO" id="GO:0007159">
    <property type="term" value="P:leukocyte cell-cell adhesion"/>
    <property type="evidence" value="ECO:0000315"/>
    <property type="project" value="UniProtKB"/>
</dbReference>
<dbReference type="GO" id="GO:0002755">
    <property type="term" value="P:MyD88-dependent toll-like receptor signaling pathway"/>
    <property type="evidence" value="ECO:0000250"/>
    <property type="project" value="UniProtKB"/>
</dbReference>
<dbReference type="GO" id="GO:0043124">
    <property type="term" value="P:negative regulation of canonical NF-kappaB signal transduction"/>
    <property type="evidence" value="ECO:0000314"/>
    <property type="project" value="UniProtKB"/>
</dbReference>
<dbReference type="GO" id="GO:0070373">
    <property type="term" value="P:negative regulation of ERK1 and ERK2 cascade"/>
    <property type="evidence" value="ECO:0000314"/>
    <property type="project" value="UniProtKB"/>
</dbReference>
<dbReference type="GO" id="GO:0045071">
    <property type="term" value="P:negative regulation of viral genome replication"/>
    <property type="evidence" value="ECO:0000304"/>
    <property type="project" value="UniProtKB"/>
</dbReference>
<dbReference type="GO" id="GO:0050729">
    <property type="term" value="P:positive regulation of inflammatory response"/>
    <property type="evidence" value="ECO:0000250"/>
    <property type="project" value="UniProtKB"/>
</dbReference>
<dbReference type="GO" id="GO:1903003">
    <property type="term" value="P:positive regulation of protein deubiquitination"/>
    <property type="evidence" value="ECO:0000314"/>
    <property type="project" value="UniProtKB"/>
</dbReference>
<dbReference type="GO" id="GO:0045944">
    <property type="term" value="P:positive regulation of transcription by RNA polymerase II"/>
    <property type="evidence" value="ECO:0000250"/>
    <property type="project" value="UniProtKB"/>
</dbReference>
<dbReference type="GO" id="GO:0006357">
    <property type="term" value="P:regulation of transcription by RNA polymerase II"/>
    <property type="evidence" value="ECO:0000318"/>
    <property type="project" value="GO_Central"/>
</dbReference>
<dbReference type="GO" id="GO:0006412">
    <property type="term" value="P:translation"/>
    <property type="evidence" value="ECO:0000304"/>
    <property type="project" value="ProtInc"/>
</dbReference>
<dbReference type="FunFam" id="1.20.5.990:FF:000001">
    <property type="entry name" value="TNFAIP3 interacting protein 1"/>
    <property type="match status" value="1"/>
</dbReference>
<dbReference type="Gene3D" id="1.20.5.990">
    <property type="entry name" value="Nemo cc2-lz domain - 1d5 darpin complex"/>
    <property type="match status" value="1"/>
</dbReference>
<dbReference type="PANTHER" id="PTHR31882:SF3">
    <property type="entry name" value="TNFAIP3-INTERACTING PROTEIN 1"/>
    <property type="match status" value="1"/>
</dbReference>
<dbReference type="PANTHER" id="PTHR31882">
    <property type="entry name" value="TNFAIP3-INTERACTING PROTEIN COILED COIL FAMILY MEMBER"/>
    <property type="match status" value="1"/>
</dbReference>
<feature type="chain" id="PRO_0000096691" description="TNFAIP3-interacting protein 1">
    <location>
        <begin position="1"/>
        <end position="636"/>
    </location>
</feature>
<feature type="region of interest" description="Disordered" evidence="4">
    <location>
        <begin position="61"/>
        <end position="151"/>
    </location>
</feature>
<feature type="region of interest" description="Interaction with Nef">
    <location>
        <begin position="94"/>
        <end position="412"/>
    </location>
</feature>
<feature type="region of interest" description="Disordered" evidence="4">
    <location>
        <begin position="252"/>
        <end position="283"/>
    </location>
</feature>
<feature type="region of interest" description="Interaction with Shigella flexneri ipah9.8">
    <location>
        <begin position="351"/>
        <end position="367"/>
    </location>
</feature>
<feature type="region of interest" description="Required for inhibitory activity of TNF-induced NF-kappa-B activation" evidence="1">
    <location>
        <begin position="431"/>
        <end position="588"/>
    </location>
</feature>
<feature type="region of interest" description="Ubiquitin-binding domain (UBD)">
    <location>
        <begin position="452"/>
        <end position="510"/>
    </location>
</feature>
<feature type="region of interest" description="Disordered" evidence="4">
    <location>
        <begin position="603"/>
        <end position="636"/>
    </location>
</feature>
<feature type="coiled-coil region" evidence="3">
    <location>
        <begin position="20"/>
        <end position="73"/>
    </location>
</feature>
<feature type="coiled-coil region" evidence="3">
    <location>
        <begin position="196"/>
        <end position="258"/>
    </location>
</feature>
<feature type="coiled-coil region" evidence="3">
    <location>
        <begin position="294"/>
        <end position="535"/>
    </location>
</feature>
<feature type="short sequence motif" description="Nuclear localization signal" evidence="3">
    <location>
        <begin position="524"/>
        <end position="530"/>
    </location>
</feature>
<feature type="compositionally biased region" description="Basic and acidic residues" evidence="4">
    <location>
        <begin position="61"/>
        <end position="71"/>
    </location>
</feature>
<feature type="compositionally biased region" description="Polar residues" evidence="4">
    <location>
        <begin position="131"/>
        <end position="142"/>
    </location>
</feature>
<feature type="compositionally biased region" description="Basic and acidic residues" evidence="4">
    <location>
        <begin position="623"/>
        <end position="636"/>
    </location>
</feature>
<feature type="modified residue" description="Phosphoserine" evidence="25">
    <location>
        <position position="77"/>
    </location>
</feature>
<feature type="modified residue" description="Phosphoserine" evidence="25">
    <location>
        <position position="284"/>
    </location>
</feature>
<feature type="modified residue" description="Phosphoserine" evidence="19 20 22 23">
    <location>
        <position position="403"/>
    </location>
</feature>
<feature type="modified residue" description="Phosphothreonine" evidence="21">
    <location>
        <position position="438"/>
    </location>
</feature>
<feature type="modified residue" description="Phosphoserine" evidence="22">
    <location>
        <position position="442"/>
    </location>
</feature>
<feature type="modified residue" description="Phosphotyrosine" evidence="8">
    <location>
        <position position="552"/>
    </location>
</feature>
<feature type="modified residue" description="Asymmetric dimethylarginine" evidence="2">
    <location>
        <position position="571"/>
    </location>
</feature>
<feature type="modified residue" description="Asymmetric dimethylarginine; alternate" evidence="24">
    <location>
        <position position="599"/>
    </location>
</feature>
<feature type="modified residue" description="Omega-N-methylarginine; alternate" evidence="24">
    <location>
        <position position="599"/>
    </location>
</feature>
<feature type="modified residue" description="Phosphoserine" evidence="23">
    <location>
        <position position="627"/>
    </location>
</feature>
<feature type="splice variant" id="VSP_045296" description="In isoform 3." evidence="13 14 15">
    <location>
        <begin position="1"/>
        <end position="53"/>
    </location>
</feature>
<feature type="splice variant" id="VSP_055208" description="In isoform 4 and isoform 6." evidence="14">
    <location>
        <begin position="530"/>
        <end position="593"/>
    </location>
</feature>
<feature type="splice variant" id="VSP_055209" description="In isoform 5." evidence="14">
    <original>ASGERYHVEPHPEHLCGAYPYAYPPMP</original>
    <variation>SLQKMTVRGLSETRLCHLAPPSSCRAS</variation>
    <location>
        <begin position="530"/>
        <end position="556"/>
    </location>
</feature>
<feature type="splice variant" id="VSP_055210" description="In isoform 8." evidence="14">
    <original>ASGERYHVEPHPEHLCGAYPYAY</original>
    <variation>SQLISDCQETRSHLHGVARASAG</variation>
    <location>
        <begin position="530"/>
        <end position="552"/>
    </location>
</feature>
<feature type="splice variant" id="VSP_055211" description="In isoform 7." evidence="14">
    <original>ASGERYHVEPHPEHLC</original>
    <variation>GTHRGCPRRLPERKVK</variation>
    <location>
        <begin position="530"/>
        <end position="545"/>
    </location>
</feature>
<feature type="splice variant" id="VSP_055212" description="In isoform 7." evidence="14">
    <location>
        <begin position="546"/>
        <end position="636"/>
    </location>
</feature>
<feature type="splice variant" id="VSP_055213" description="In isoform 8." evidence="14">
    <location>
        <begin position="553"/>
        <end position="636"/>
    </location>
</feature>
<feature type="splice variant" id="VSP_055214" description="In isoform 5." evidence="14">
    <location>
        <begin position="557"/>
        <end position="636"/>
    </location>
</feature>
<feature type="splice variant" id="VSP_003913" description="In isoform 2 and isoform 6." evidence="14 16 17">
    <original>SPKNDREGPQ</original>
    <variation>PADLRLPRN</variation>
    <location>
        <begin position="627"/>
        <end position="636"/>
    </location>
</feature>
<feature type="sequence variant" id="VAR_051453" description="In dbSNP:rs2303018.">
    <original>P</original>
    <variation>S</variation>
    <location>
        <position position="103"/>
    </location>
</feature>
<feature type="sequence variant" id="VAR_051454" description="In dbSNP:rs2233289.">
    <original>A</original>
    <variation>V</variation>
    <location>
        <position position="146"/>
    </location>
</feature>
<feature type="sequence variant" id="VAR_051455" description="In dbSNP:rs2233290.">
    <original>P</original>
    <variation>A</variation>
    <location>
        <position position="151"/>
    </location>
</feature>
<feature type="sequence variant" id="VAR_051456" description="In dbSNP:rs2233292.">
    <original>R</original>
    <variation>Q</variation>
    <location>
        <position position="233"/>
    </location>
</feature>
<feature type="sequence variant" id="VAR_051457" description="In dbSNP:rs2233295.">
    <original>A</original>
    <variation>V</variation>
    <location>
        <position position="260"/>
    </location>
</feature>
<feature type="sequence variant" id="VAR_067965" description="In patients with gastrointestinal diffuse large cell lymphoma; dbSNP:rs117663772." evidence="10">
    <original>R</original>
    <variation>W</variation>
    <location>
        <position position="263"/>
    </location>
</feature>
<feature type="sequence variant" id="VAR_067966" description="In patients with gastrointestinal diffuse large cell lymphoma; somatic mutation; dbSNP:rs185683917." evidence="10">
    <original>T</original>
    <variation>M</variation>
    <location>
        <position position="286"/>
    </location>
</feature>
<feature type="sequence variant" id="VAR_067967" description="In patients with gastrointestinal diffuse large cell lymphoma; dbSNP:rs748495842." evidence="10">
    <original>I</original>
    <variation>T</variation>
    <location>
        <position position="374"/>
    </location>
</feature>
<feature type="sequence variant" id="VAR_067968" description="In patients with gastrointestinal diffuse large cell lymphoma; somatic mutation; loss of inhibitory activity on CARD11- and TNF-induced NF-kappa-B activation." evidence="10">
    <original>E</original>
    <variation>K</variation>
    <location>
        <position position="476"/>
    </location>
</feature>
<feature type="mutagenesis site" description="Abolishes binding to polyubiquitin ('K-63'-linked and linear)." evidence="11">
    <original>D</original>
    <variation>N</variation>
    <location>
        <position position="472"/>
    </location>
</feature>
<feature type="mutagenesis site" description="Abolishes interaction with PI3K p85 regulatory subunit and abolishes interaction between SELPLG and PI3K p85 regulatory subunit." evidence="8">
    <original>Y</original>
    <variation>F</variation>
    <location>
        <position position="552"/>
    </location>
</feature>
<feature type="sequence conflict" description="In Ref. 10; AAH12133." evidence="18" ref="10">
    <original>G</original>
    <variation>D</variation>
    <location>
        <position position="148"/>
    </location>
</feature>
<feature type="sequence conflict" description="In Ref. 6; BAH13185." evidence="18" ref="6">
    <original>G</original>
    <variation>S</variation>
    <location>
        <position position="178"/>
    </location>
</feature>
<feature type="sequence conflict" description="In Ref. 2; AAG42154 and 3; BAF34946." evidence="18" ref="2 3">
    <original>A</original>
    <variation>P</variation>
    <location>
        <position position="299"/>
    </location>
</feature>
<feature type="helix" evidence="28">
    <location>
        <begin position="121"/>
        <end position="124"/>
    </location>
</feature>
<feature type="strand" evidence="28">
    <location>
        <begin position="125"/>
        <end position="127"/>
    </location>
</feature>
<feature type="helix" evidence="27">
    <location>
        <begin position="448"/>
        <end position="451"/>
    </location>
</feature>
<feature type="helix" evidence="26">
    <location>
        <begin position="455"/>
        <end position="510"/>
    </location>
</feature>
<organism>
    <name type="scientific">Homo sapiens</name>
    <name type="common">Human</name>
    <dbReference type="NCBI Taxonomy" id="9606"/>
    <lineage>
        <taxon>Eukaryota</taxon>
        <taxon>Metazoa</taxon>
        <taxon>Chordata</taxon>
        <taxon>Craniata</taxon>
        <taxon>Vertebrata</taxon>
        <taxon>Euteleostomi</taxon>
        <taxon>Mammalia</taxon>
        <taxon>Eutheria</taxon>
        <taxon>Euarchontoglires</taxon>
        <taxon>Primates</taxon>
        <taxon>Haplorrhini</taxon>
        <taxon>Catarrhini</taxon>
        <taxon>Hominidae</taxon>
        <taxon>Homo</taxon>
    </lineage>
</organism>